<comment type="function">
    <text evidence="2 4 5 7 11 12 13 16 26">A cytochrome P450 monooxygenase involved in the metabolism of various endogenous substrates, including fatty acids, steroid hormones and vitamins (PubMed:10681376, PubMed:11555828, PubMed:12865317, PubMed:19965576, PubMed:9435160). Mechanistically, uses molecular oxygen inserting one oxygen atom into a substrate, and reducing the second into a water molecule, with two electrons provided by NADPH via cytochrome P450 reductase (NADPH--hemoprotein reductase) (PubMed:10681376, PubMed:11555828, PubMed:12865317, PubMed:19965576, PubMed:9435160). Catalyzes the hydroxylation of carbon-hydrogen bonds (PubMed:11555828, PubMed:12865317). Exhibits high catalytic activity for the formation of hydroxyestrogens from estrone (E1) and 17beta-estradiol (E2), namely 2-hydroxy E1 and E2 (PubMed:11555828, PubMed:12865317). Metabolizes cholesterol toward 25-hydroxycholesterol, a physiological regulator of cellular cholesterol homeostasis (PubMed:21576599). May act as a major enzyme for all-trans retinoic acid biosynthesis in the liver. Catalyzes two successive oxidative transformation of all-trans retinol to all-trans retinal and then to the active form all-trans retinoic acid (PubMed:10681376). Primarily catalyzes stereoselective epoxidation of the last double bond of polyunsaturated fatty acids (PUFA), displaying a strong preference for the (R,S) stereoisomer (PubMed:19965576). Catalyzes bisallylic hydroxylation and omega-1 hydroxylation of PUFA (PubMed:9435160). May also participate in eicosanoids metabolism by converting hydroperoxide species into oxo metabolites (lipoxygenase-like reaction, NADPH-independent) (PubMed:21068195). Plays a role in the oxidative metabolism of xenobiotics. Catalyzes the N-hydroxylation of heterocyclic amines and the O-deethylation of phenacetin (PubMed:14725854). Metabolizes caffeine via N3-demethylation (Probable).</text>
</comment>
<comment type="catalytic activity">
    <reaction evidence="4 5 16">
        <text>an organic molecule + reduced [NADPH--hemoprotein reductase] + O2 = an alcohol + oxidized [NADPH--hemoprotein reductase] + H2O + H(+)</text>
        <dbReference type="Rhea" id="RHEA:17149"/>
        <dbReference type="Rhea" id="RHEA-COMP:11964"/>
        <dbReference type="Rhea" id="RHEA-COMP:11965"/>
        <dbReference type="ChEBI" id="CHEBI:15377"/>
        <dbReference type="ChEBI" id="CHEBI:15378"/>
        <dbReference type="ChEBI" id="CHEBI:15379"/>
        <dbReference type="ChEBI" id="CHEBI:30879"/>
        <dbReference type="ChEBI" id="CHEBI:57618"/>
        <dbReference type="ChEBI" id="CHEBI:58210"/>
        <dbReference type="ChEBI" id="CHEBI:142491"/>
        <dbReference type="EC" id="1.14.14.1"/>
    </reaction>
    <physiologicalReaction direction="left-to-right" evidence="24 25 30">
        <dbReference type="Rhea" id="RHEA:17150"/>
    </physiologicalReaction>
</comment>
<comment type="catalytic activity">
    <reaction evidence="4 5">
        <text>17beta-estradiol + reduced [NADPH--hemoprotein reductase] + O2 = 2-hydroxy-17beta-estradiol + oxidized [NADPH--hemoprotein reductase] + H2O + H(+)</text>
        <dbReference type="Rhea" id="RHEA:47212"/>
        <dbReference type="Rhea" id="RHEA-COMP:11964"/>
        <dbReference type="Rhea" id="RHEA-COMP:11965"/>
        <dbReference type="ChEBI" id="CHEBI:15377"/>
        <dbReference type="ChEBI" id="CHEBI:15378"/>
        <dbReference type="ChEBI" id="CHEBI:15379"/>
        <dbReference type="ChEBI" id="CHEBI:16469"/>
        <dbReference type="ChEBI" id="CHEBI:28744"/>
        <dbReference type="ChEBI" id="CHEBI:57618"/>
        <dbReference type="ChEBI" id="CHEBI:58210"/>
    </reaction>
    <physiologicalReaction direction="left-to-right" evidence="24 25">
        <dbReference type="Rhea" id="RHEA:47213"/>
    </physiologicalReaction>
</comment>
<comment type="catalytic activity">
    <reaction evidence="4 5">
        <text>17beta-estradiol + reduced [NADPH--hemoprotein reductase] + O2 = 4-hydroxy-17beta-estradiol + oxidized [NADPH--hemoprotein reductase] + H2O + H(+)</text>
        <dbReference type="Rhea" id="RHEA:47280"/>
        <dbReference type="Rhea" id="RHEA-COMP:11964"/>
        <dbReference type="Rhea" id="RHEA-COMP:11965"/>
        <dbReference type="ChEBI" id="CHEBI:15377"/>
        <dbReference type="ChEBI" id="CHEBI:15378"/>
        <dbReference type="ChEBI" id="CHEBI:15379"/>
        <dbReference type="ChEBI" id="CHEBI:16469"/>
        <dbReference type="ChEBI" id="CHEBI:57618"/>
        <dbReference type="ChEBI" id="CHEBI:58210"/>
        <dbReference type="ChEBI" id="CHEBI:62845"/>
    </reaction>
    <physiologicalReaction direction="left-to-right" evidence="24 25">
        <dbReference type="Rhea" id="RHEA:47281"/>
    </physiologicalReaction>
</comment>
<comment type="catalytic activity">
    <reaction evidence="5">
        <text>estrone + reduced [NADPH--hemoprotein reductase] + O2 = 2-hydroxyestrone + oxidized [NADPH--hemoprotein reductase] + H2O + H(+)</text>
        <dbReference type="Rhea" id="RHEA:47208"/>
        <dbReference type="Rhea" id="RHEA-COMP:11964"/>
        <dbReference type="Rhea" id="RHEA-COMP:11965"/>
        <dbReference type="ChEBI" id="CHEBI:1156"/>
        <dbReference type="ChEBI" id="CHEBI:15377"/>
        <dbReference type="ChEBI" id="CHEBI:15378"/>
        <dbReference type="ChEBI" id="CHEBI:15379"/>
        <dbReference type="ChEBI" id="CHEBI:17263"/>
        <dbReference type="ChEBI" id="CHEBI:57618"/>
        <dbReference type="ChEBI" id="CHEBI:58210"/>
    </reaction>
    <physiologicalReaction direction="left-to-right" evidence="25">
        <dbReference type="Rhea" id="RHEA:47209"/>
    </physiologicalReaction>
</comment>
<comment type="catalytic activity">
    <reaction evidence="5">
        <text>estrone + reduced [NADPH--hemoprotein reductase] + O2 = 4-hydroxyestrone + oxidized [NADPH--hemoprotein reductase] + H2O + H(+)</text>
        <dbReference type="Rhea" id="RHEA:47292"/>
        <dbReference type="Rhea" id="RHEA-COMP:11964"/>
        <dbReference type="Rhea" id="RHEA-COMP:11965"/>
        <dbReference type="ChEBI" id="CHEBI:15377"/>
        <dbReference type="ChEBI" id="CHEBI:15378"/>
        <dbReference type="ChEBI" id="CHEBI:15379"/>
        <dbReference type="ChEBI" id="CHEBI:17263"/>
        <dbReference type="ChEBI" id="CHEBI:57618"/>
        <dbReference type="ChEBI" id="CHEBI:58210"/>
        <dbReference type="ChEBI" id="CHEBI:87602"/>
    </reaction>
    <physiologicalReaction direction="left-to-right" evidence="25">
        <dbReference type="Rhea" id="RHEA:47293"/>
    </physiologicalReaction>
</comment>
<comment type="catalytic activity">
    <reaction evidence="13">
        <text>cholesterol + reduced [NADPH--hemoprotein reductase] + O2 = 25-hydroxycholesterol + oxidized [NADPH--hemoprotein reductase] + H2O + H(+)</text>
        <dbReference type="Rhea" id="RHEA:50256"/>
        <dbReference type="Rhea" id="RHEA-COMP:11964"/>
        <dbReference type="Rhea" id="RHEA-COMP:11965"/>
        <dbReference type="ChEBI" id="CHEBI:15377"/>
        <dbReference type="ChEBI" id="CHEBI:15378"/>
        <dbReference type="ChEBI" id="CHEBI:15379"/>
        <dbReference type="ChEBI" id="CHEBI:16113"/>
        <dbReference type="ChEBI" id="CHEBI:42977"/>
        <dbReference type="ChEBI" id="CHEBI:57618"/>
        <dbReference type="ChEBI" id="CHEBI:58210"/>
    </reaction>
    <physiologicalReaction direction="left-to-right" evidence="29">
        <dbReference type="Rhea" id="RHEA:50257"/>
    </physiologicalReaction>
</comment>
<comment type="catalytic activity">
    <reaction evidence="2">
        <text>all-trans-retinol + reduced [NADPH--hemoprotein reductase] + O2 = all-trans-retinal + oxidized [NADPH--hemoprotein reductase] + 2 H2O + H(+)</text>
        <dbReference type="Rhea" id="RHEA:42092"/>
        <dbReference type="Rhea" id="RHEA-COMP:11964"/>
        <dbReference type="Rhea" id="RHEA-COMP:11965"/>
        <dbReference type="ChEBI" id="CHEBI:15377"/>
        <dbReference type="ChEBI" id="CHEBI:15378"/>
        <dbReference type="ChEBI" id="CHEBI:15379"/>
        <dbReference type="ChEBI" id="CHEBI:17336"/>
        <dbReference type="ChEBI" id="CHEBI:17898"/>
        <dbReference type="ChEBI" id="CHEBI:57618"/>
        <dbReference type="ChEBI" id="CHEBI:58210"/>
    </reaction>
    <physiologicalReaction direction="left-to-right" evidence="23">
        <dbReference type="Rhea" id="RHEA:42093"/>
    </physiologicalReaction>
</comment>
<comment type="catalytic activity">
    <reaction evidence="2">
        <text>all-trans-retinal + reduced [NADPH--hemoprotein reductase] + O2 = all-trans-retinoate + oxidized [NADPH--hemoprotein reductase] + H2O + 2 H(+)</text>
        <dbReference type="Rhea" id="RHEA:42088"/>
        <dbReference type="Rhea" id="RHEA-COMP:11964"/>
        <dbReference type="Rhea" id="RHEA-COMP:11965"/>
        <dbReference type="ChEBI" id="CHEBI:15377"/>
        <dbReference type="ChEBI" id="CHEBI:15378"/>
        <dbReference type="ChEBI" id="CHEBI:15379"/>
        <dbReference type="ChEBI" id="CHEBI:17898"/>
        <dbReference type="ChEBI" id="CHEBI:35291"/>
        <dbReference type="ChEBI" id="CHEBI:57618"/>
        <dbReference type="ChEBI" id="CHEBI:58210"/>
    </reaction>
    <physiologicalReaction direction="left-to-right" evidence="23">
        <dbReference type="Rhea" id="RHEA:42089"/>
    </physiologicalReaction>
</comment>
<comment type="catalytic activity">
    <reaction evidence="11">
        <text>(5Z,8Z,11Z,14Z)-eicosatetraenoate + reduced [NADPH--hemoprotein reductase] + O2 = (14R,15S)-epoxy-(5Z,8Z,11Z)-eicosatrienoate + oxidized [NADPH--hemoprotein reductase] + H2O + H(+)</text>
        <dbReference type="Rhea" id="RHEA:49860"/>
        <dbReference type="Rhea" id="RHEA-COMP:11964"/>
        <dbReference type="Rhea" id="RHEA-COMP:11965"/>
        <dbReference type="ChEBI" id="CHEBI:15377"/>
        <dbReference type="ChEBI" id="CHEBI:15378"/>
        <dbReference type="ChEBI" id="CHEBI:15379"/>
        <dbReference type="ChEBI" id="CHEBI:32395"/>
        <dbReference type="ChEBI" id="CHEBI:57618"/>
        <dbReference type="ChEBI" id="CHEBI:58210"/>
        <dbReference type="ChEBI" id="CHEBI:131965"/>
    </reaction>
    <physiologicalReaction direction="left-to-right" evidence="27">
        <dbReference type="Rhea" id="RHEA:49861"/>
    </physiologicalReaction>
</comment>
<comment type="catalytic activity">
    <reaction evidence="11">
        <text>(5Z,8Z,11Z,14Z)-eicosatetraenoate + reduced [NADPH--hemoprotein reductase] + O2 = (14S,15R)-epoxy-(5Z,8Z,11Z)-eicosatrienoate + oxidized [NADPH--hemoprotein reductase] + H2O + H(+)</text>
        <dbReference type="Rhea" id="RHEA:49856"/>
        <dbReference type="Rhea" id="RHEA-COMP:11964"/>
        <dbReference type="Rhea" id="RHEA-COMP:11965"/>
        <dbReference type="ChEBI" id="CHEBI:15377"/>
        <dbReference type="ChEBI" id="CHEBI:15378"/>
        <dbReference type="ChEBI" id="CHEBI:15379"/>
        <dbReference type="ChEBI" id="CHEBI:32395"/>
        <dbReference type="ChEBI" id="CHEBI:57618"/>
        <dbReference type="ChEBI" id="CHEBI:58210"/>
        <dbReference type="ChEBI" id="CHEBI:131964"/>
    </reaction>
    <physiologicalReaction direction="left-to-right" evidence="27">
        <dbReference type="Rhea" id="RHEA:49857"/>
    </physiologicalReaction>
</comment>
<comment type="catalytic activity">
    <reaction evidence="11">
        <text>(5Z,8Z,11Z,14Z,17Z)-eicosapentaenoate + reduced [NADPH--hemoprotein reductase] + O2 = (17R,18S)-epoxy-(5Z,8Z,11Z,14Z)-eicosatetraenoate + oxidized [NADPH--hemoprotein reductase] + H2O + H(+)</text>
        <dbReference type="Rhea" id="RHEA:39779"/>
        <dbReference type="Rhea" id="RHEA-COMP:11964"/>
        <dbReference type="Rhea" id="RHEA-COMP:11965"/>
        <dbReference type="ChEBI" id="CHEBI:15377"/>
        <dbReference type="ChEBI" id="CHEBI:15378"/>
        <dbReference type="ChEBI" id="CHEBI:15379"/>
        <dbReference type="ChEBI" id="CHEBI:57618"/>
        <dbReference type="ChEBI" id="CHEBI:58210"/>
        <dbReference type="ChEBI" id="CHEBI:58562"/>
        <dbReference type="ChEBI" id="CHEBI:76634"/>
    </reaction>
    <physiologicalReaction direction="left-to-right" evidence="27">
        <dbReference type="Rhea" id="RHEA:39780"/>
    </physiologicalReaction>
</comment>
<comment type="catalytic activity">
    <reaction evidence="11">
        <text>(4Z,7Z,10Z,13Z,16Z,19Z)-docosahexaenoate + reduced [NADPH--hemoprotein reductase] + O2 = (19R,20S)-epoxy-(4Z,7Z,10Z,13Z,16Z)-docosapentaenoate + oxidized [NADPH--hemoprotein reductase] + H2O + H(+)</text>
        <dbReference type="Rhea" id="RHEA:52120"/>
        <dbReference type="Rhea" id="RHEA-COMP:11964"/>
        <dbReference type="Rhea" id="RHEA-COMP:11965"/>
        <dbReference type="ChEBI" id="CHEBI:15377"/>
        <dbReference type="ChEBI" id="CHEBI:15378"/>
        <dbReference type="ChEBI" id="CHEBI:15379"/>
        <dbReference type="ChEBI" id="CHEBI:57618"/>
        <dbReference type="ChEBI" id="CHEBI:58210"/>
        <dbReference type="ChEBI" id="CHEBI:77016"/>
        <dbReference type="ChEBI" id="CHEBI:136410"/>
    </reaction>
    <physiologicalReaction direction="left-to-right" evidence="27">
        <dbReference type="Rhea" id="RHEA:52121"/>
    </physiologicalReaction>
</comment>
<comment type="catalytic activity">
    <reaction evidence="12">
        <text>(5S)-hydroperoxy-(6E,8Z,11Z,14Z)-eicosatetraenoate = 5-oxo-(6E,8Z,11Z,14Z)-eicosatetraenoate + H2O</text>
        <dbReference type="Rhea" id="RHEA:48632"/>
        <dbReference type="ChEBI" id="CHEBI:15377"/>
        <dbReference type="ChEBI" id="CHEBI:57450"/>
        <dbReference type="ChEBI" id="CHEBI:65342"/>
    </reaction>
    <physiologicalReaction direction="left-to-right" evidence="28">
        <dbReference type="Rhea" id="RHEA:48633"/>
    </physiologicalReaction>
</comment>
<comment type="catalytic activity">
    <reaction evidence="12">
        <text>(12S)-hydroperoxy-(5Z,8Z,10E,14Z)-eicosatetraenoate = 12-oxo-(5Z,8Z,10E,14Z)-eicosatetraenoate + H2O</text>
        <dbReference type="Rhea" id="RHEA:37947"/>
        <dbReference type="ChEBI" id="CHEBI:15377"/>
        <dbReference type="ChEBI" id="CHEBI:57444"/>
        <dbReference type="ChEBI" id="CHEBI:75231"/>
        <dbReference type="EC" id="4.2.1.152"/>
    </reaction>
    <physiologicalReaction direction="left-to-right" evidence="28">
        <dbReference type="Rhea" id="RHEA:37948"/>
    </physiologicalReaction>
</comment>
<comment type="catalytic activity">
    <reaction evidence="12">
        <text>(15S)-hydroperoxy-(5Z,8Z,11Z,13E)-eicosatetraenoate = 15-oxo-(5Z,8Z,11Z,13E)-eicosatetraenoate + H2O</text>
        <dbReference type="Rhea" id="RHEA:48636"/>
        <dbReference type="ChEBI" id="CHEBI:15377"/>
        <dbReference type="ChEBI" id="CHEBI:57410"/>
        <dbReference type="ChEBI" id="CHEBI:57446"/>
    </reaction>
    <physiologicalReaction direction="left-to-right" evidence="28">
        <dbReference type="Rhea" id="RHEA:48637"/>
    </physiologicalReaction>
</comment>
<comment type="catalytic activity">
    <reaction evidence="12">
        <text>(13S)-hydroperoxy-(9Z,11E)-octadecadienoate = 13-oxo-(9Z,11E)-octadecadienoate + H2O</text>
        <dbReference type="Rhea" id="RHEA:48716"/>
        <dbReference type="ChEBI" id="CHEBI:15377"/>
        <dbReference type="ChEBI" id="CHEBI:57466"/>
        <dbReference type="ChEBI" id="CHEBI:90781"/>
    </reaction>
    <physiologicalReaction direction="left-to-right" evidence="28">
        <dbReference type="Rhea" id="RHEA:48717"/>
    </physiologicalReaction>
</comment>
<comment type="catalytic activity">
    <reaction evidence="16">
        <text>(5Z,8Z,11Z,14Z)-eicosatetraenoate + reduced [NADPH--hemoprotein reductase] + O2 = 13-hydroxy-(5Z,8Z,11Z,14Z)-eicosatetraenoate + oxidized [NADPH--hemoprotein reductase] + H2O + H(+)</text>
        <dbReference type="Rhea" id="RHEA:52292"/>
        <dbReference type="Rhea" id="RHEA-COMP:11964"/>
        <dbReference type="Rhea" id="RHEA-COMP:11965"/>
        <dbReference type="ChEBI" id="CHEBI:15377"/>
        <dbReference type="ChEBI" id="CHEBI:15378"/>
        <dbReference type="ChEBI" id="CHEBI:15379"/>
        <dbReference type="ChEBI" id="CHEBI:32395"/>
        <dbReference type="ChEBI" id="CHEBI:57618"/>
        <dbReference type="ChEBI" id="CHEBI:58210"/>
        <dbReference type="ChEBI" id="CHEBI:136524"/>
    </reaction>
    <physiologicalReaction direction="left-to-right" evidence="30">
        <dbReference type="Rhea" id="RHEA:52293"/>
    </physiologicalReaction>
</comment>
<comment type="catalytic activity">
    <reaction evidence="16">
        <text>(5Z,8Z,11Z,14Z)-eicosatetraenoate + reduced [NADPH--hemoprotein reductase] + O2 = 19-hydroxy-(5Z,8Z,11Z,14Z)-eicosatetraenoate + oxidized [NADPH--hemoprotein reductase] + H2O + H(+)</text>
        <dbReference type="Rhea" id="RHEA:39759"/>
        <dbReference type="Rhea" id="RHEA-COMP:11964"/>
        <dbReference type="Rhea" id="RHEA-COMP:11965"/>
        <dbReference type="ChEBI" id="CHEBI:15377"/>
        <dbReference type="ChEBI" id="CHEBI:15378"/>
        <dbReference type="ChEBI" id="CHEBI:15379"/>
        <dbReference type="ChEBI" id="CHEBI:32395"/>
        <dbReference type="ChEBI" id="CHEBI:57618"/>
        <dbReference type="ChEBI" id="CHEBI:58210"/>
        <dbReference type="ChEBI" id="CHEBI:76627"/>
    </reaction>
    <physiologicalReaction direction="left-to-right" evidence="30">
        <dbReference type="Rhea" id="RHEA:39760"/>
    </physiologicalReaction>
</comment>
<comment type="catalytic activity">
    <reaction evidence="16">
        <text>(9Z,12Z)-octadecadienoate + reduced [NADPH--hemoprotein reductase] + O2 = 11-hydroxy-(9Z,12Z)-octadecadienoate + oxidized [NADPH--hemoprotein reductase] + H2O + H(+)</text>
        <dbReference type="Rhea" id="RHEA:52284"/>
        <dbReference type="Rhea" id="RHEA-COMP:11964"/>
        <dbReference type="Rhea" id="RHEA-COMP:11965"/>
        <dbReference type="ChEBI" id="CHEBI:15377"/>
        <dbReference type="ChEBI" id="CHEBI:15378"/>
        <dbReference type="ChEBI" id="CHEBI:15379"/>
        <dbReference type="ChEBI" id="CHEBI:30245"/>
        <dbReference type="ChEBI" id="CHEBI:57618"/>
        <dbReference type="ChEBI" id="CHEBI:58210"/>
        <dbReference type="ChEBI" id="CHEBI:136522"/>
    </reaction>
    <physiologicalReaction direction="left-to-right" evidence="30">
        <dbReference type="Rhea" id="RHEA:52285"/>
    </physiologicalReaction>
</comment>
<comment type="cofactor">
    <cofactor>
        <name>heme</name>
        <dbReference type="ChEBI" id="CHEBI:30413"/>
    </cofactor>
</comment>
<comment type="biophysicochemical properties">
    <kinetics>
        <KM evidence="4">19 uM for 17beta-estradiol (2-hydroxylation)</KM>
        <KM evidence="2">9 uM for all-trans retinol</KM>
        <KM evidence="7">4 uM for 2-amino-6-methyldipyrido[1,2-a:3',2'-d]imidazole</KM>
        <KM evidence="7">21 uM for 2-amino-3-methylimidazo[4,5-f]quinoline</KM>
        <KM evidence="7">26 uM for 2-amino-2,4-dimethylimidazo[4,5-f]quinoline</KM>
        <KM evidence="7">27 uM for 2-amino-3,8-dimethylimidazo[4,5-f]quinoxaline</KM>
        <KM evidence="7">71 uM for 2-amino-1-methyl-6-phenylimidazo[4,5-b]pyridine</KM>
        <KM evidence="7">25 uM for phenacetin</KM>
        <Vmax evidence="4">9.2 nmol/min/nmol enzyme toward 17beta-estradiol (2-hydroxylation)</Vmax>
        <Vmax evidence="2">491.0 pmol/min/nmol enzyme toward all-trans retinol</Vmax>
    </kinetics>
</comment>
<comment type="pathway">
    <text evidence="2">Cofactor metabolism; retinol metabolism.</text>
</comment>
<comment type="pathway">
    <text evidence="13">Steroid metabolism; cholesterol metabolism.</text>
</comment>
<comment type="pathway">
    <text evidence="11 12 16">Lipid metabolism; arachidonate metabolism.</text>
</comment>
<comment type="subunit">
    <text evidence="14">Interacts with PGRMC1; the interaction requires PGRMC1 homodimerization.</text>
</comment>
<comment type="interaction">
    <interactant intactId="EBI-17183330">
        <id>P05177</id>
    </interactant>
    <interactant intactId="EBI-348517">
        <id>O95870</id>
        <label>ABHD16A</label>
    </interactant>
    <organismsDiffer>false</organismsDiffer>
    <experiments>3</experiments>
</comment>
<comment type="subcellular location">
    <subcellularLocation>
        <location>Endoplasmic reticulum membrane</location>
        <topology>Peripheral membrane protein</topology>
    </subcellularLocation>
    <subcellularLocation>
        <location evidence="13">Microsome membrane</location>
        <topology>Peripheral membrane protein</topology>
    </subcellularLocation>
</comment>
<comment type="tissue specificity">
    <text>Liver.</text>
</comment>
<comment type="induction">
    <text>By nicotine, omeprazole, phenobarbital, primidone and rifampicin.</text>
</comment>
<comment type="polymorphism">
    <text evidence="26">The CYP1A2*1F allele which is quite common (40 to 50%) is due to a substitution of a base in the non-coding region of the CYP1A2 gene and has the effect of decreasing the enzyme inducibility. Individuals who are homozygous for the CYP1A2*1F allele are 'slow' caffeine metabolizers. Thus for these individual increased intake of caffeine seems to be associated with a concomitant increase in the risk of non-fatal myocardial infraction (MI).</text>
</comment>
<comment type="similarity">
    <text evidence="22">Belongs to the cytochrome P450 family.</text>
</comment>
<comment type="online information" name="PharmVar Pharmacogen Variation Consortium">
    <link uri="https://www.pharmvar.org/gene/CYP1A2"/>
    <text>CYP1A2 alleles</text>
</comment>
<organism>
    <name type="scientific">Homo sapiens</name>
    <name type="common">Human</name>
    <dbReference type="NCBI Taxonomy" id="9606"/>
    <lineage>
        <taxon>Eukaryota</taxon>
        <taxon>Metazoa</taxon>
        <taxon>Chordata</taxon>
        <taxon>Craniata</taxon>
        <taxon>Vertebrata</taxon>
        <taxon>Euteleostomi</taxon>
        <taxon>Mammalia</taxon>
        <taxon>Eutheria</taxon>
        <taxon>Euarchontoglires</taxon>
        <taxon>Primates</taxon>
        <taxon>Haplorrhini</taxon>
        <taxon>Catarrhini</taxon>
        <taxon>Hominidae</taxon>
        <taxon>Homo</taxon>
    </lineage>
</organism>
<protein>
    <recommendedName>
        <fullName evidence="20">Cytochrome P450 1A2</fullName>
        <ecNumber evidence="4 5 16">1.14.14.1</ecNumber>
    </recommendedName>
    <alternativeName>
        <fullName>CYPIA2</fullName>
    </alternativeName>
    <alternativeName>
        <fullName evidence="29">Cholesterol 25-hydroxylase</fullName>
    </alternativeName>
    <alternativeName>
        <fullName>Cytochrome P(3)450</fullName>
    </alternativeName>
    <alternativeName>
        <fullName>Cytochrome P450 4</fullName>
    </alternativeName>
    <alternativeName>
        <fullName>Cytochrome P450-P3</fullName>
    </alternativeName>
    <alternativeName>
        <fullName evidence="28">Hydroperoxy icosatetraenoate dehydratase</fullName>
        <ecNumber evidence="12">4.2.1.152</ecNumber>
    </alternativeName>
</protein>
<feature type="initiator methionine" description="Removed" evidence="15">
    <location>
        <position position="1"/>
    </location>
</feature>
<feature type="chain" id="PRO_0000051651" description="Cytochrome P450 1A2">
    <location>
        <begin position="2"/>
        <end position="516"/>
    </location>
</feature>
<feature type="binding site" evidence="22">
    <location>
        <position position="226"/>
    </location>
    <ligand>
        <name>substrate</name>
    </ligand>
</feature>
<feature type="binding site" description="axial binding residue">
    <location>
        <position position="458"/>
    </location>
    <ligand>
        <name>heme</name>
        <dbReference type="ChEBI" id="CHEBI:30413"/>
    </ligand>
    <ligandPart>
        <name>Fe</name>
        <dbReference type="ChEBI" id="CHEBI:18248"/>
    </ligandPart>
</feature>
<feature type="glycosylation site" description="O-linked (GlcNAc) serine" evidence="1">
    <location>
        <position position="69"/>
    </location>
</feature>
<feature type="sequence variant" id="VAR_023196" description="In dbSNP:rs17861152." evidence="8 9">
    <original>S</original>
    <variation>C</variation>
    <location>
        <position position="18"/>
    </location>
</feature>
<feature type="sequence variant" id="VAR_008349" description="In allele CYP1A2*2; dbSNP:rs56160784." evidence="17">
    <original>F</original>
    <variation>L</variation>
    <location>
        <position position="21"/>
    </location>
</feature>
<feature type="sequence variant" id="VAR_025182" description="In allele CYP1A2*15; dbSNP:rs72547511." evidence="10">
    <original>P</original>
    <variation>R</variation>
    <location>
        <position position="42"/>
    </location>
</feature>
<feature type="sequence variant" id="VAR_025183" description="In dbSNP:rs45565238." evidence="19">
    <original>G</original>
    <variation>R</variation>
    <location>
        <position position="73"/>
    </location>
</feature>
<feature type="sequence variant" id="VAR_020848" description="In allele CYP1A2*9; dbSNP:rs138652540." evidence="6">
    <original>T</original>
    <variation>M</variation>
    <location>
        <position position="83"/>
    </location>
</feature>
<feature type="sequence variant" id="VAR_025184" description="In dbSNP:rs34067076." evidence="19">
    <original>D</original>
    <variation>N</variation>
    <location>
        <position position="104"/>
    </location>
</feature>
<feature type="sequence variant" id="VAR_025185" description="In dbSNP:rs45442197." evidence="19">
    <original>L</original>
    <variation>F</variation>
    <location>
        <position position="111"/>
    </location>
</feature>
<feature type="sequence variant" id="VAR_020849" description="In allele CYP1A2*10; dbSNP:rs72547512." evidence="6">
    <original>E</original>
    <variation>Q</variation>
    <location>
        <position position="168"/>
    </location>
</feature>
<feature type="sequence variant" id="VAR_020850" description="In allele CYP1A2*11; drastic reduction in O-deethylation of phenacetin and 7-ethoxyresorufin; has a Vmax of approximately 5% of that of the wild-type and 5-fold lower Km value; dbSNP:rs72547513." evidence="6">
    <original>F</original>
    <variation>L</variation>
    <location>
        <position position="186"/>
    </location>
</feature>
<feature type="sequence variant" id="VAR_025186" description="In dbSNP:rs45540640." evidence="19">
    <original>F</original>
    <variation>V</variation>
    <location>
        <position position="205"/>
    </location>
</feature>
<feature type="sequence variant" id="VAR_020851" description="In allele CYP1A2*12; dbSNP:rs758748797." evidence="6">
    <original>S</original>
    <variation>C</variation>
    <location>
        <position position="212"/>
    </location>
</feature>
<feature type="sequence variant" id="VAR_025187" description="In dbSNP:rs45468096." evidence="19">
    <original>R</original>
    <variation>W</variation>
    <location>
        <position position="281"/>
    </location>
</feature>
<feature type="sequence variant" id="VAR_024709" description="In dbSNP:rs17861157." evidence="8">
    <original>S</original>
    <variation>R</variation>
    <location>
        <position position="298"/>
    </location>
</feature>
<feature type="sequence variant" id="VAR_020852" description="In allele CYP1A2*13; dbSNP:rs35796837." evidence="6">
    <original>G</original>
    <variation>S</variation>
    <location>
        <position position="299"/>
    </location>
</feature>
<feature type="sequence variant" id="VAR_024710" description="In dbSNP:rs28399418." evidence="8 18">
    <original>I</original>
    <variation>V</variation>
    <location>
        <position position="314"/>
    </location>
</feature>
<feature type="sequence variant" id="VAR_020793" description="In allele CYP1A2*3; increases N-hydroxylation activity of heterocyclic amines; reduces phenacetin O-deethylation activity; dbSNP:rs56276455." evidence="3 7">
    <original>D</original>
    <variation>N</variation>
    <location>
        <position position="348"/>
    </location>
</feature>
<feature type="sequence variant" id="VAR_025188" description="In allele CYP1A2*16; dbSNP:rs72547515." evidence="10">
    <original>R</original>
    <variation>Q</variation>
    <location>
        <position position="377"/>
    </location>
</feature>
<feature type="sequence variant" id="VAR_020794" description="In allele CYP1A2*4; increases catalytic efficiency of N-hydroxylation towards some heterocyclic amines and reduces towards others; reduces catalytic efficiency of phenacetin O-deethylation due to a high decrease in the affinity for phenacetin; dbSNP:rs72547516." evidence="3 7">
    <original>I</original>
    <variation>F</variation>
    <location>
        <position position="386"/>
    </location>
</feature>
<feature type="sequence variant" id="VAR_020795" description="In allele CYP1A2*5; increases N-hydroxylation activity of heterocyclic amines; reduces catalytic efficiency of phenacetin O-deethylation; dbSNP:rs55889066." evidence="3 7">
    <original>C</original>
    <variation>Y</variation>
    <location>
        <position position="406"/>
    </location>
</feature>
<feature type="sequence variant" id="VAR_020796" description="In allele CYP1A2*6; not detected when expressed in heterologous system as it may be critical for maintenance of protein tertiary structure; dbSNP:rs28399424." evidence="3 7 8">
    <original>R</original>
    <variation>W</variation>
    <location>
        <position position="431"/>
    </location>
</feature>
<feature type="sequence variant" id="VAR_020853" description="In allele CYP1A2*14; dbSNP:rs45486893." evidence="6 19">
    <original>T</original>
    <variation>I</variation>
    <location>
        <position position="438"/>
    </location>
</feature>
<feature type="sequence variant" id="VAR_025189" description="In allele CYP1A2*8; dbSNP:rs72547517." evidence="10">
    <original>R</original>
    <variation>H</variation>
    <location>
        <position position="456"/>
    </location>
</feature>
<feature type="sequence variant" id="VAR_055563" description="In dbSNP:rs34151816.">
    <original>R</original>
    <variation>W</variation>
    <location>
        <position position="457"/>
    </location>
</feature>
<feature type="sequence conflict" description="In Ref. 2; AAA35738." evidence="22" ref="2">
    <original>R</original>
    <variation>S</variation>
    <location>
        <position position="79"/>
    </location>
</feature>
<feature type="sequence conflict" description="In Ref. 8; AAH67427." evidence="22" ref="8">
    <original>G</original>
    <variation>D</variation>
    <location>
        <position position="81"/>
    </location>
</feature>
<feature type="sequence conflict" description="In Ref. 5; AAF13599." evidence="22" ref="5">
    <original>K</original>
    <variation>M</variation>
    <location>
        <position position="170"/>
    </location>
</feature>
<feature type="sequence conflict" description="In Ref. 2; AAA52154." evidence="22" ref="2">
    <original>V</original>
    <variation>L</variation>
    <location>
        <position position="311"/>
    </location>
</feature>
<feature type="sequence conflict" description="In Ref. 8; AAH67429." evidence="22" ref="8">
    <original>S</original>
    <variation>P</variation>
    <location>
        <position position="380"/>
    </location>
</feature>
<feature type="sequence conflict" description="In Ref. 2; AAA52154." evidence="22" ref="2">
    <original>LF</original>
    <variation>MLV</variation>
    <location>
        <begin position="450"/>
        <end position="451"/>
    </location>
</feature>
<feature type="sequence conflict" description="In Ref. 5; AAF13599." evidence="22" ref="5">
    <original>T</original>
    <variation>I</variation>
    <location>
        <position position="492"/>
    </location>
</feature>
<feature type="sequence conflict" description="In Ref. 1; CAA77335 and 3; AAA52146/AAA52163." evidence="22" ref="1 3">
    <location>
        <position position="511"/>
    </location>
</feature>
<feature type="sequence conflict" description="In Ref. 2; AAA35738." evidence="22" ref="2">
    <original>R</original>
    <variation>P</variation>
    <location>
        <position position="512"/>
    </location>
</feature>
<feature type="turn" evidence="32">
    <location>
        <begin position="49"/>
        <end position="51"/>
    </location>
</feature>
<feature type="helix" evidence="32">
    <location>
        <begin position="54"/>
        <end position="57"/>
    </location>
</feature>
<feature type="helix" evidence="32">
    <location>
        <begin position="61"/>
        <end position="72"/>
    </location>
</feature>
<feature type="strand" evidence="32">
    <location>
        <begin position="74"/>
        <end position="80"/>
    </location>
</feature>
<feature type="strand" evidence="32">
    <location>
        <begin position="83"/>
        <end position="88"/>
    </location>
</feature>
<feature type="helix" evidence="32">
    <location>
        <begin position="91"/>
        <end position="98"/>
    </location>
</feature>
<feature type="turn" evidence="32">
    <location>
        <begin position="99"/>
        <end position="101"/>
    </location>
</feature>
<feature type="helix" evidence="32">
    <location>
        <begin position="102"/>
        <end position="104"/>
    </location>
</feature>
<feature type="helix" evidence="32">
    <location>
        <begin position="112"/>
        <end position="115"/>
    </location>
</feature>
<feature type="turn" evidence="32">
    <location>
        <begin position="123"/>
        <end position="125"/>
    </location>
</feature>
<feature type="helix" evidence="32">
    <location>
        <begin position="131"/>
        <end position="146"/>
    </location>
</feature>
<feature type="turn" evidence="32">
    <location>
        <begin position="147"/>
        <end position="149"/>
    </location>
</feature>
<feature type="helix" evidence="32">
    <location>
        <begin position="160"/>
        <end position="181"/>
    </location>
</feature>
<feature type="helix" evidence="32">
    <location>
        <begin position="188"/>
        <end position="205"/>
    </location>
</feature>
<feature type="helix" evidence="32">
    <location>
        <begin position="206"/>
        <end position="208"/>
    </location>
</feature>
<feature type="helix" evidence="32">
    <location>
        <begin position="214"/>
        <end position="220"/>
    </location>
</feature>
<feature type="helix" evidence="32">
    <location>
        <begin position="221"/>
        <end position="223"/>
    </location>
</feature>
<feature type="helix" evidence="32">
    <location>
        <begin position="224"/>
        <end position="227"/>
    </location>
</feature>
<feature type="helix" evidence="32">
    <location>
        <begin position="235"/>
        <end position="237"/>
    </location>
</feature>
<feature type="helix" evidence="32">
    <location>
        <begin position="240"/>
        <end position="244"/>
    </location>
</feature>
<feature type="helix" evidence="32">
    <location>
        <begin position="248"/>
        <end position="273"/>
    </location>
</feature>
<feature type="helix" evidence="32">
    <location>
        <begin position="283"/>
        <end position="293"/>
    </location>
</feature>
<feature type="helix" evidence="32">
    <location>
        <begin position="305"/>
        <end position="308"/>
    </location>
</feature>
<feature type="helix" evidence="32">
    <location>
        <begin position="310"/>
        <end position="335"/>
    </location>
</feature>
<feature type="helix" evidence="32">
    <location>
        <begin position="337"/>
        <end position="350"/>
    </location>
</feature>
<feature type="turn" evidence="32">
    <location>
        <begin position="351"/>
        <end position="353"/>
    </location>
</feature>
<feature type="helix" evidence="32">
    <location>
        <begin position="359"/>
        <end position="361"/>
    </location>
</feature>
<feature type="helix" evidence="32">
    <location>
        <begin position="366"/>
        <end position="379"/>
    </location>
</feature>
<feature type="strand" evidence="32">
    <location>
        <begin position="394"/>
        <end position="396"/>
    </location>
</feature>
<feature type="strand" evidence="32">
    <location>
        <begin position="399"/>
        <end position="401"/>
    </location>
</feature>
<feature type="strand" evidence="32">
    <location>
        <begin position="406"/>
        <end position="410"/>
    </location>
</feature>
<feature type="helix" evidence="32">
    <location>
        <begin position="411"/>
        <end position="416"/>
    </location>
</feature>
<feature type="turn" evidence="32">
    <location>
        <begin position="418"/>
        <end position="420"/>
    </location>
</feature>
<feature type="helix" evidence="32">
    <location>
        <begin position="429"/>
        <end position="432"/>
    </location>
</feature>
<feature type="strand" evidence="32">
    <location>
        <begin position="437"/>
        <end position="440"/>
    </location>
</feature>
<feature type="helix" evidence="32">
    <location>
        <begin position="442"/>
        <end position="445"/>
    </location>
</feature>
<feature type="helix" evidence="32">
    <location>
        <begin position="454"/>
        <end position="456"/>
    </location>
</feature>
<feature type="helix" evidence="32">
    <location>
        <begin position="461"/>
        <end position="478"/>
    </location>
</feature>
<feature type="strand" evidence="32">
    <location>
        <begin position="480"/>
        <end position="482"/>
    </location>
</feature>
<feature type="strand" evidence="32">
    <location>
        <begin position="496"/>
        <end position="498"/>
    </location>
</feature>
<feature type="strand" evidence="32">
    <location>
        <begin position="507"/>
        <end position="510"/>
    </location>
</feature>
<evidence type="ECO:0000250" key="1"/>
<evidence type="ECO:0000269" key="2">
    <source>
    </source>
</evidence>
<evidence type="ECO:0000269" key="3">
    <source>
    </source>
</evidence>
<evidence type="ECO:0000269" key="4">
    <source>
    </source>
</evidence>
<evidence type="ECO:0000269" key="5">
    <source>
    </source>
</evidence>
<evidence type="ECO:0000269" key="6">
    <source>
    </source>
</evidence>
<evidence type="ECO:0000269" key="7">
    <source>
    </source>
</evidence>
<evidence type="ECO:0000269" key="8">
    <source>
    </source>
</evidence>
<evidence type="ECO:0000269" key="9">
    <source>
    </source>
</evidence>
<evidence type="ECO:0000269" key="10">
    <source>
    </source>
</evidence>
<evidence type="ECO:0000269" key="11">
    <source>
    </source>
</evidence>
<evidence type="ECO:0000269" key="12">
    <source>
    </source>
</evidence>
<evidence type="ECO:0000269" key="13">
    <source>
    </source>
</evidence>
<evidence type="ECO:0000269" key="14">
    <source>
    </source>
</evidence>
<evidence type="ECO:0000269" key="15">
    <source>
    </source>
</evidence>
<evidence type="ECO:0000269" key="16">
    <source>
    </source>
</evidence>
<evidence type="ECO:0000269" key="17">
    <source>
    </source>
</evidence>
<evidence type="ECO:0000269" key="18">
    <source ref="5"/>
</evidence>
<evidence type="ECO:0000269" key="19">
    <source ref="7"/>
</evidence>
<evidence type="ECO:0000303" key="20">
    <source>
    </source>
</evidence>
<evidence type="ECO:0000303" key="21">
    <source>
    </source>
</evidence>
<evidence type="ECO:0000305" key="22"/>
<evidence type="ECO:0000305" key="23">
    <source>
    </source>
</evidence>
<evidence type="ECO:0000305" key="24">
    <source>
    </source>
</evidence>
<evidence type="ECO:0000305" key="25">
    <source>
    </source>
</evidence>
<evidence type="ECO:0000305" key="26">
    <source>
    </source>
</evidence>
<evidence type="ECO:0000305" key="27">
    <source>
    </source>
</evidence>
<evidence type="ECO:0000305" key="28">
    <source>
    </source>
</evidence>
<evidence type="ECO:0000305" key="29">
    <source>
    </source>
</evidence>
<evidence type="ECO:0000305" key="30">
    <source>
    </source>
</evidence>
<evidence type="ECO:0000312" key="31">
    <source>
        <dbReference type="HGNC" id="HGNC:2596"/>
    </source>
</evidence>
<evidence type="ECO:0007829" key="32">
    <source>
        <dbReference type="PDB" id="2HI4"/>
    </source>
</evidence>
<sequence>MALSQSVPFSATELLLASAIFCLVFWVLKGLRPRVPKGLKSPPEPWGWPLLGHVLTLGKNPHLALSRMSQRYGDVLQIRIGSTPVLVLSRLDTIRQALVRQGDDFKGRPDLYTSTLITDGQSLTFSTDSGPVWAARRRLAQNALNTFSIASDPASSSSCYLEEHVSKEAKALISRLQELMAGPGHFDPYNQVVVSVANVIGAMCFGQHFPESSDEMLSLVKNTHEFVETASSGNPLDFFPILRYLPNPALQRFKAFNQRFLWFLQKTVQEHYQDFDKNSVRDITGALFKHSKKGPRASGNLIPQEKIVNLVNDIFGAGFDTVTTAISWSLMYLVTKPEIQRKIQKELDTVIGRERRPRLSDRPQLPYLEAFILETFRHSSFLPFTIPHSTTRDTTLNGFYIPKKCCVFVNQWQVNHDPELWEDPSEFRPERFLTADGTAINKPLSEKMMLFGMGKRRCIGEVLAKWEIFLFLAILLQQLEFSVPPGVKVDLTPIYGLTMKHARCEHVQARLRFSIN</sequence>
<keyword id="KW-0002">3D-structure</keyword>
<keyword id="KW-0903">Direct protein sequencing</keyword>
<keyword id="KW-0256">Endoplasmic reticulum</keyword>
<keyword id="KW-0276">Fatty acid metabolism</keyword>
<keyword id="KW-0325">Glycoprotein</keyword>
<keyword id="KW-0349">Heme</keyword>
<keyword id="KW-0408">Iron</keyword>
<keyword id="KW-0443">Lipid metabolism</keyword>
<keyword id="KW-0456">Lyase</keyword>
<keyword id="KW-0472">Membrane</keyword>
<keyword id="KW-0479">Metal-binding</keyword>
<keyword id="KW-0492">Microsome</keyword>
<keyword id="KW-0503">Monooxygenase</keyword>
<keyword id="KW-0560">Oxidoreductase</keyword>
<keyword id="KW-1267">Proteomics identification</keyword>
<keyword id="KW-1185">Reference proteome</keyword>
<keyword id="KW-0753">Steroid metabolism</keyword>
<keyword id="KW-1207">Sterol metabolism</keyword>
<proteinExistence type="evidence at protein level"/>
<name>CP1A2_HUMAN</name>
<accession>P05177</accession>
<accession>Q16754</accession>
<accession>Q6NWU3</accession>
<accession>Q6NWU5</accession>
<accession>Q9BXX7</accession>
<accession>Q9UK49</accession>
<dbReference type="EC" id="1.14.14.1" evidence="4 5 16"/>
<dbReference type="EC" id="4.2.1.152" evidence="12"/>
<dbReference type="EMBL" id="Z00036">
    <property type="protein sequence ID" value="CAA77335.1"/>
    <property type="molecule type" value="mRNA"/>
</dbReference>
<dbReference type="EMBL" id="M55053">
    <property type="protein sequence ID" value="AAA52146.1"/>
    <property type="molecule type" value="mRNA"/>
</dbReference>
<dbReference type="EMBL" id="M12078">
    <property type="protein sequence ID" value="AAA52154.1"/>
    <property type="molecule type" value="mRNA"/>
</dbReference>
<dbReference type="EMBL" id="L00389">
    <property type="protein sequence ID" value="AAA35738.1"/>
    <property type="molecule type" value="Genomic_DNA"/>
</dbReference>
<dbReference type="EMBL" id="L00384">
    <property type="protein sequence ID" value="AAA35738.1"/>
    <property type="status" value="JOINED"/>
    <property type="molecule type" value="Genomic_DNA"/>
</dbReference>
<dbReference type="EMBL" id="L00385">
    <property type="protein sequence ID" value="AAA35738.1"/>
    <property type="status" value="JOINED"/>
    <property type="molecule type" value="Genomic_DNA"/>
</dbReference>
<dbReference type="EMBL" id="L00386">
    <property type="protein sequence ID" value="AAA35738.1"/>
    <property type="status" value="JOINED"/>
    <property type="molecule type" value="Genomic_DNA"/>
</dbReference>
<dbReference type="EMBL" id="L00388">
    <property type="protein sequence ID" value="AAA35738.1"/>
    <property type="status" value="JOINED"/>
    <property type="molecule type" value="Genomic_DNA"/>
</dbReference>
<dbReference type="EMBL" id="L00387">
    <property type="protein sequence ID" value="AAA35738.1"/>
    <property type="status" value="JOINED"/>
    <property type="molecule type" value="Genomic_DNA"/>
</dbReference>
<dbReference type="EMBL" id="M31667">
    <property type="protein sequence ID" value="AAA52163.1"/>
    <property type="molecule type" value="Genomic_DNA"/>
</dbReference>
<dbReference type="EMBL" id="M31664">
    <property type="protein sequence ID" value="AAA52163.1"/>
    <property type="status" value="JOINED"/>
    <property type="molecule type" value="Genomic_DNA"/>
</dbReference>
<dbReference type="EMBL" id="M31665">
    <property type="protein sequence ID" value="AAA52163.1"/>
    <property type="status" value="JOINED"/>
    <property type="molecule type" value="Genomic_DNA"/>
</dbReference>
<dbReference type="EMBL" id="M31666">
    <property type="protein sequence ID" value="AAA52163.1"/>
    <property type="status" value="JOINED"/>
    <property type="molecule type" value="Genomic_DNA"/>
</dbReference>
<dbReference type="EMBL" id="AF182274">
    <property type="protein sequence ID" value="AAF13599.1"/>
    <property type="molecule type" value="mRNA"/>
</dbReference>
<dbReference type="EMBL" id="AF253322">
    <property type="protein sequence ID" value="AAK25728.1"/>
    <property type="molecule type" value="Genomic_DNA"/>
</dbReference>
<dbReference type="EMBL" id="DQ022432">
    <property type="protein sequence ID" value="AAY26399.1"/>
    <property type="molecule type" value="Genomic_DNA"/>
</dbReference>
<dbReference type="EMBL" id="BC067424">
    <property type="protein sequence ID" value="AAH67424.1"/>
    <property type="molecule type" value="mRNA"/>
</dbReference>
<dbReference type="EMBL" id="BC067425">
    <property type="protein sequence ID" value="AAH67425.1"/>
    <property type="molecule type" value="mRNA"/>
</dbReference>
<dbReference type="EMBL" id="BC067426">
    <property type="protein sequence ID" value="AAH67426.1"/>
    <property type="molecule type" value="mRNA"/>
</dbReference>
<dbReference type="EMBL" id="BC067427">
    <property type="protein sequence ID" value="AAH67427.1"/>
    <property type="molecule type" value="mRNA"/>
</dbReference>
<dbReference type="EMBL" id="BC067428">
    <property type="protein sequence ID" value="AAH67428.1"/>
    <property type="molecule type" value="mRNA"/>
</dbReference>
<dbReference type="EMBL" id="BC067429">
    <property type="protein sequence ID" value="AAH67429.1"/>
    <property type="molecule type" value="mRNA"/>
</dbReference>
<dbReference type="CCDS" id="CCDS32293.1"/>
<dbReference type="PIR" id="S16718">
    <property type="entry name" value="O4HU4"/>
</dbReference>
<dbReference type="RefSeq" id="NP_000752.2">
    <property type="nucleotide sequence ID" value="NM_000761.5"/>
</dbReference>
<dbReference type="PDB" id="2HI4">
    <property type="method" value="X-ray"/>
    <property type="resolution" value="1.95 A"/>
    <property type="chains" value="A=27-516"/>
</dbReference>
<dbReference type="PDBsum" id="2HI4"/>
<dbReference type="SMR" id="P05177"/>
<dbReference type="BioGRID" id="107924">
    <property type="interactions" value="11"/>
</dbReference>
<dbReference type="FunCoup" id="P05177">
    <property type="interactions" value="256"/>
</dbReference>
<dbReference type="IntAct" id="P05177">
    <property type="interactions" value="7"/>
</dbReference>
<dbReference type="STRING" id="9606.ENSP00000342007"/>
<dbReference type="BindingDB" id="P05177"/>
<dbReference type="ChEMBL" id="CHEMBL3356"/>
<dbReference type="DrugBank" id="DB08496">
    <property type="generic name" value="(R)-warfarin"/>
</dbReference>
<dbReference type="DrugBank" id="DB01667">
    <property type="generic name" value="8-azaguanine"/>
</dbReference>
<dbReference type="DrugBank" id="DB14132">
    <property type="generic name" value="8-chlorotheophylline"/>
</dbReference>
<dbReference type="DrugBank" id="DB04356">
    <property type="generic name" value="9-Deazaguanine"/>
</dbReference>
<dbReference type="DrugBank" id="DB02489">
    <property type="generic name" value="9-Methylguanine"/>
</dbReference>
<dbReference type="DrugBank" id="DB11932">
    <property type="generic name" value="Abametapir"/>
</dbReference>
<dbReference type="DrugBank" id="DB12001">
    <property type="generic name" value="Abemaciclib"/>
</dbReference>
<dbReference type="DrugBank" id="DB05812">
    <property type="generic name" value="Abiraterone"/>
</dbReference>
<dbReference type="DrugBank" id="DB13573">
    <property type="generic name" value="Acefylline"/>
</dbReference>
<dbReference type="DrugBank" id="DB01418">
    <property type="generic name" value="Acenocoumarol"/>
</dbReference>
<dbReference type="DrugBank" id="DB00316">
    <property type="generic name" value="Acetaminophen"/>
</dbReference>
<dbReference type="DrugBank" id="DB15568">
    <property type="generic name" value="Adagrasib"/>
</dbReference>
<dbReference type="DrugBank" id="DB06594">
    <property type="generic name" value="Agomelatine"/>
</dbReference>
<dbReference type="DrugBank" id="DB00518">
    <property type="generic name" value="Albendazole"/>
</dbReference>
<dbReference type="DrugBank" id="DB05396">
    <property type="generic name" value="Albinterferon Alfa-2B"/>
</dbReference>
<dbReference type="DrugBank" id="DB00969">
    <property type="generic name" value="Alosetron"/>
</dbReference>
<dbReference type="DrugBank" id="DB07453">
    <property type="generic name" value="alpha-Naphthoflavone"/>
</dbReference>
<dbReference type="DrugBank" id="DB01424">
    <property type="generic name" value="Aminophenazone"/>
</dbReference>
<dbReference type="DrugBank" id="DB01223">
    <property type="generic name" value="Aminophylline"/>
</dbReference>
<dbReference type="DrugBank" id="DB01118">
    <property type="generic name" value="Amiodarone"/>
</dbReference>
<dbReference type="DrugBank" id="DB00321">
    <property type="generic name" value="Amitriptyline"/>
</dbReference>
<dbReference type="DrugBank" id="DB00261">
    <property type="generic name" value="Anagrelide"/>
</dbReference>
<dbReference type="DrugBank" id="DB01217">
    <property type="generic name" value="Anastrozole"/>
</dbReference>
<dbReference type="DrugBank" id="DB01435">
    <property type="generic name" value="Antipyrine"/>
</dbReference>
<dbReference type="DrugBank" id="DB06605">
    <property type="generic name" value="Apixaban"/>
</dbReference>
<dbReference type="DrugBank" id="DB05676">
    <property type="generic name" value="Apremilast"/>
</dbReference>
<dbReference type="DrugBank" id="DB06413">
    <property type="generic name" value="Armodafinil"/>
</dbReference>
<dbReference type="DrugBank" id="DB06216">
    <property type="generic name" value="Asenapine"/>
</dbReference>
<dbReference type="DrugBank" id="DB01072">
    <property type="generic name" value="Atazanavir"/>
</dbReference>
<dbReference type="DrugBank" id="DB15011">
    <property type="generic name" value="Avacopan"/>
</dbReference>
<dbReference type="DrugBank" id="DB06442">
    <property type="generic name" value="Avasimibe"/>
</dbReference>
<dbReference type="DrugBank" id="DB06626">
    <property type="generic name" value="Axitinib"/>
</dbReference>
<dbReference type="DrugBank" id="DB00993">
    <property type="generic name" value="Azathioprine"/>
</dbReference>
<dbReference type="DrugBank" id="DB00972">
    <property type="generic name" value="Azelastine"/>
</dbReference>
<dbReference type="DrugBank" id="DB13203">
    <property type="generic name" value="Bamifylline"/>
</dbReference>
<dbReference type="DrugBank" id="DB05015">
    <property type="generic name" value="Belinostat"/>
</dbReference>
<dbReference type="DrugBank" id="DB16703">
    <property type="generic name" value="Belumosudil"/>
</dbReference>
<dbReference type="DrugBank" id="DB06769">
    <property type="generic name" value="Bendamustine"/>
</dbReference>
<dbReference type="DrugBank" id="DB01086">
    <property type="generic name" value="Benzocaine"/>
</dbReference>
<dbReference type="DrugBank" id="DB06770">
    <property type="generic name" value="Benzyl alcohol"/>
</dbReference>
<dbReference type="DrugBank" id="DB06771">
    <property type="generic name" value="Besifloxacin"/>
</dbReference>
<dbReference type="DrugBank" id="DB06732">
    <property type="generic name" value="beta-Naphthoflavone"/>
</dbReference>
<dbReference type="DrugBank" id="DB00195">
    <property type="generic name" value="Betaxolol"/>
</dbReference>
<dbReference type="DrugBank" id="DB04889">
    <property type="generic name" value="Bicifadine"/>
</dbReference>
<dbReference type="DrugBank" id="DB11967">
    <property type="generic name" value="Binimetinib"/>
</dbReference>
<dbReference type="DrugBank" id="DB13975">
    <property type="generic name" value="Black cohosh"/>
</dbReference>
<dbReference type="DrugBank" id="DB00188">
    <property type="generic name" value="Bortezomib"/>
</dbReference>
<dbReference type="DrugBank" id="DB12151">
    <property type="generic name" value="Brincidofovir"/>
</dbReference>
<dbReference type="DrugBank" id="DB01558">
    <property type="generic name" value="Bromazepam"/>
</dbReference>
<dbReference type="DrugBank" id="DB14018">
    <property type="generic name" value="Bromotheophylline"/>
</dbReference>
<dbReference type="DrugBank" id="DB13812">
    <property type="generic name" value="Bufylline"/>
</dbReference>
<dbReference type="DrugBank" id="DB00201">
    <property type="generic name" value="Caffeine"/>
</dbReference>
<dbReference type="DrugBank" id="DB09061">
    <property type="generic name" value="Cannabidiol"/>
</dbReference>
<dbReference type="DrugBank" id="DB14737">
    <property type="generic name" value="Cannabinol"/>
</dbReference>
<dbReference type="DrugBank" id="DB11791">
    <property type="generic name" value="Capmatinib"/>
</dbReference>
<dbReference type="DrugBank" id="DB06774">
    <property type="generic name" value="Capsaicin"/>
</dbReference>
<dbReference type="DrugBank" id="DB00564">
    <property type="generic name" value="Carbamazepine"/>
</dbReference>
<dbReference type="DrugBank" id="DB06016">
    <property type="generic name" value="Cariprazine"/>
</dbReference>
<dbReference type="DrugBank" id="DB01136">
    <property type="generic name" value="Carvedilol"/>
</dbReference>
<dbReference type="DrugBank" id="DB12814">
    <property type="generic name" value="Cepeginterferon alfa-2B"/>
</dbReference>
<dbReference type="DrugBank" id="DB00477">
    <property type="generic name" value="Chlorpromazine"/>
</dbReference>
<dbReference type="DrugBank" id="DB00356">
    <property type="generic name" value="Chlorzoxazone"/>
</dbReference>
<dbReference type="DrugBank" id="DB01166">
    <property type="generic name" value="Cilostazol"/>
</dbReference>
<dbReference type="DrugBank" id="DB00501">
    <property type="generic name" value="Cimetidine"/>
</dbReference>
<dbReference type="DrugBank" id="DB01012">
    <property type="generic name" value="Cinacalcet"/>
</dbReference>
<dbReference type="DrugBank" id="DB00568">
    <property type="generic name" value="Cinnarizine"/>
</dbReference>
<dbReference type="DrugBank" id="DB00827">
    <property type="generic name" value="Cinoxacin"/>
</dbReference>
<dbReference type="DrugBank" id="DB00537">
    <property type="generic name" value="Ciprofloxacin"/>
</dbReference>
<dbReference type="DrugBank" id="DB00215">
    <property type="generic name" value="Citalopram"/>
</dbReference>
<dbReference type="DrugBank" id="DB12499">
    <property type="generic name" value="Clascoterone"/>
</dbReference>
<dbReference type="DrugBank" id="DB14025">
    <property type="generic name" value="Clinafloxacin"/>
</dbReference>
<dbReference type="DrugBank" id="DB00349">
    <property type="generic name" value="Clobazam"/>
</dbReference>
<dbReference type="DrugBank" id="DB01242">
    <property type="generic name" value="Clomipramine"/>
</dbReference>
<dbReference type="DrugBank" id="DB00575">
    <property type="generic name" value="Clonidine"/>
</dbReference>
<dbReference type="DrugBank" id="DB00758">
    <property type="generic name" value="Clopidogrel"/>
</dbReference>
<dbReference type="DrugBank" id="DB00363">
    <property type="generic name" value="Clozapine"/>
</dbReference>
<dbReference type="DrugBank" id="DB00286">
    <property type="generic name" value="Conjugated estrogens"/>
</dbReference>
<dbReference type="DrugBank" id="DB11672">
    <property type="generic name" value="Curcumin"/>
</dbReference>
<dbReference type="DrugBank" id="DB14635">
    <property type="generic name" value="Curcumin sulfate"/>
</dbReference>
<dbReference type="DrugBank" id="DB00924">
    <property type="generic name" value="Cyclobenzaprine"/>
</dbReference>
<dbReference type="DrugBank" id="DB08912">
    <property type="generic name" value="Dabrafenib"/>
</dbReference>
<dbReference type="DrugBank" id="DB00851">
    <property type="generic name" value="Dacarbazine"/>
</dbReference>
<dbReference type="DrugBank" id="DB06292">
    <property type="generic name" value="Dapagliflozin"/>
</dbReference>
<dbReference type="DrugBank" id="DB01254">
    <property type="generic name" value="Dasatinib"/>
</dbReference>
<dbReference type="DrugBank" id="DB01609">
    <property type="generic name" value="Deferasirox"/>
</dbReference>
<dbReference type="DrugBank" id="DB01151">
    <property type="generic name" value="Desipramine"/>
</dbReference>
<dbReference type="DrugBank" id="DB16650">
    <property type="generic name" value="Deucravacitinib"/>
</dbReference>
<dbReference type="DrugBank" id="DB18847">
    <property type="generic name" value="Deuruxolitinib"/>
</dbReference>
<dbReference type="DrugBank" id="DB12161">
    <property type="generic name" value="Deutetrabenazine"/>
</dbReference>
<dbReference type="DrugBank" id="DB01191">
    <property type="generic name" value="Dexfenfluramine"/>
</dbReference>
<dbReference type="DrugBank" id="DB00633">
    <property type="generic name" value="Dexmedetomidine"/>
</dbReference>
<dbReference type="DrugBank" id="DB11994">
    <property type="generic name" value="Diacerein"/>
</dbReference>
<dbReference type="DrugBank" id="DB00586">
    <property type="generic name" value="Diclofenac"/>
</dbReference>
<dbReference type="DrugBank" id="DB11511">
    <property type="generic name" value="Difloxacin"/>
</dbReference>
<dbReference type="DrugBank" id="DB12945">
    <property type="generic name" value="Dihydralazine"/>
</dbReference>
<dbReference type="DrugBank" id="DB00280">
    <property type="generic name" value="Disopyramide"/>
</dbReference>
<dbReference type="DrugBank" id="DB01184">
    <property type="generic name" value="Domperidone"/>
</dbReference>
<dbReference type="DrugBank" id="DB09167">
    <property type="generic name" value="Dosulepin"/>
</dbReference>
<dbReference type="DrugBank" id="DB05928">
    <property type="generic name" value="Dovitinib"/>
</dbReference>
<dbReference type="DrugBank" id="DB01142">
    <property type="generic name" value="Doxepin"/>
</dbReference>
<dbReference type="DrugBank" id="DB09273">
    <property type="generic name" value="Doxofylline"/>
</dbReference>
<dbReference type="DrugBank" id="DB00470">
    <property type="generic name" value="Dronabinol"/>
</dbReference>
<dbReference type="DrugBank" id="DB00476">
    <property type="generic name" value="Duloxetine"/>
</dbReference>
<dbReference type="DrugBank" id="DB00625">
    <property type="generic name" value="Efavirenz"/>
</dbReference>
<dbReference type="DrugBank" id="DB15444">
    <property type="generic name" value="Elexacaftor"/>
</dbReference>
<dbReference type="DrugBank" id="DB06210">
    <property type="generic name" value="Eltrombopag"/>
</dbReference>
<dbReference type="DrugBank" id="DB13874">
    <property type="generic name" value="Enasidenib"/>
</dbReference>
<dbReference type="DrugBank" id="DB11718">
    <property type="generic name" value="Encorafenib"/>
</dbReference>
<dbReference type="DrugBank" id="DB00467">
    <property type="generic name" value="Enoxacin"/>
</dbReference>
<dbReference type="DrugBank" id="DB11404">
    <property type="generic name" value="Enrofloxacin"/>
</dbReference>
<dbReference type="DrugBank" id="DB00530">
    <property type="generic name" value="Erlotinib"/>
</dbReference>
<dbReference type="DrugBank" id="DB00783">
    <property type="generic name" value="Estradiol"/>
</dbReference>
<dbReference type="DrugBank" id="DB13952">
    <property type="generic name" value="Estradiol acetate"/>
</dbReference>
<dbReference type="DrugBank" id="DB13953">
    <property type="generic name" value="Estradiol benzoate"/>
</dbReference>
<dbReference type="DrugBank" id="DB13954">
    <property type="generic name" value="Estradiol cypionate"/>
</dbReference>
<dbReference type="DrugBank" id="DB13955">
    <property type="generic name" value="Estradiol dienanthate"/>
</dbReference>
<dbReference type="DrugBank" id="DB13956">
    <property type="generic name" value="Estradiol valerate"/>
</dbReference>
<dbReference type="DrugBank" id="DB00655">
    <property type="generic name" value="Estrone"/>
</dbReference>
<dbReference type="DrugBank" id="DB04574">
    <property type="generic name" value="Estrone sulfate"/>
</dbReference>
<dbReference type="DrugBank" id="DB13592">
    <property type="generic name" value="Etamiphylline"/>
</dbReference>
<dbReference type="DrugBank" id="DB00330">
    <property type="generic name" value="Ethambutol"/>
</dbReference>
<dbReference type="DrugBank" id="DB00898">
    <property type="generic name" value="Ethanol"/>
</dbReference>
<dbReference type="DrugBank" id="DB00977">
    <property type="generic name" value="Ethinylestradiol"/>
</dbReference>
<dbReference type="DrugBank" id="DB00773">
    <property type="generic name" value="Etoposide"/>
</dbReference>
<dbReference type="DrugBank" id="DB01628">
    <property type="generic name" value="Etoricoxib"/>
</dbReference>
<dbReference type="DrugBank" id="DB00927">
    <property type="generic name" value="Famotidine"/>
</dbReference>
<dbReference type="DrugBank" id="DB04854">
    <property type="generic name" value="Febuxostat"/>
</dbReference>
<dbReference type="DrugBank" id="DB01482">
    <property type="generic name" value="Fenethylline"/>
</dbReference>
<dbReference type="DrugBank" id="DB00574">
    <property type="generic name" value="Fenfluramine"/>
</dbReference>
<dbReference type="DrugBank" id="DB12265">
    <property type="generic name" value="Fexinidazole"/>
</dbReference>
<dbReference type="DrugBank" id="DB15669">
    <property type="generic name" value="Fezolinetant"/>
</dbReference>
<dbReference type="DrugBank" id="DB01195">
    <property type="generic name" value="Flecainide"/>
</dbReference>
<dbReference type="DrugBank" id="DB08972">
    <property type="generic name" value="Flumequine"/>
</dbReference>
<dbReference type="DrugBank" id="DB04841">
    <property type="generic name" value="Flunarizine"/>
</dbReference>
<dbReference type="DrugBank" id="DB00544">
    <property type="generic name" value="Fluorouracil"/>
</dbReference>
<dbReference type="DrugBank" id="DB00472">
    <property type="generic name" value="Fluoxetine"/>
</dbReference>
<dbReference type="DrugBank" id="DB00499">
    <property type="generic name" value="Flutamide"/>
</dbReference>
<dbReference type="DrugBank" id="DB00176">
    <property type="generic name" value="Fluvoxamine"/>
</dbReference>
<dbReference type="DrugBank" id="DB01320">
    <property type="generic name" value="Fosphenytoin"/>
</dbReference>
<dbReference type="DrugBank" id="DB00998">
    <property type="generic name" value="Frovatriptan"/>
</dbReference>
<dbReference type="DrugBank" id="DB14029">
    <property type="generic name" value="Furafylline"/>
</dbReference>
<dbReference type="DrugBank" id="DB06160">
    <property type="generic name" value="Garenoxacin"/>
</dbReference>
<dbReference type="DrugBank" id="DB01044">
    <property type="generic name" value="Gatifloxacin"/>
</dbReference>
<dbReference type="DrugBank" id="DB01241">
    <property type="generic name" value="Gemfibrozil"/>
</dbReference>
<dbReference type="DrugBank" id="DB01155">
    <property type="generic name" value="Gemifloxacin"/>
</dbReference>
<dbReference type="DrugBank" id="DB01645">
    <property type="generic name" value="Genistein"/>
</dbReference>
<dbReference type="DrugBank" id="DB01381">
    <property type="generic name" value="Ginkgo biloba"/>
</dbReference>
<dbReference type="DrugBank" id="DB12645">
    <property type="generic name" value="Givinostat"/>
</dbReference>
<dbReference type="DrugBank" id="DB00986">
    <property type="generic name" value="Glycopyrronium"/>
</dbReference>
<dbReference type="DrugBank" id="DB00365">
    <property type="generic name" value="Grepafloxacin"/>
</dbReference>
<dbReference type="DrugBank" id="DB00400">
    <property type="generic name" value="Griseofulvin"/>
</dbReference>
<dbReference type="DrugBank" id="DB05708">
    <property type="generic name" value="GTS-21"/>
</dbReference>
<dbReference type="DrugBank" id="DB00629">
    <property type="generic name" value="Guanabenz"/>
</dbReference>
<dbReference type="DrugBank" id="DB00502">
    <property type="generic name" value="Haloperidol"/>
</dbReference>
<dbReference type="DrugBank" id="DB01094">
    <property type="generic name" value="Hesperetin"/>
</dbReference>
<dbReference type="DrugBank" id="DB14999">
    <property type="generic name" value="Human interferon beta"/>
</dbReference>
<dbReference type="DrugBank" id="DB04076">
    <property type="generic name" value="Hypoxanthine"/>
</dbReference>
<dbReference type="DrugBank" id="DB11737">
    <property type="generic name" value="Icotinib"/>
</dbReference>
<dbReference type="DrugBank" id="DB00619">
    <property type="generic name" value="Imatinib"/>
</dbReference>
<dbReference type="DrugBank" id="DB00458">
    <property type="generic name" value="Imipramine"/>
</dbReference>
<dbReference type="DrugBank" id="DB11564">
    <property type="generic name" value="Insulin argine"/>
</dbReference>
<dbReference type="DrugBank" id="DB01306">
    <property type="generic name" value="Insulin aspart"/>
</dbReference>
<dbReference type="DrugBank" id="DB09456">
    <property type="generic name" value="Insulin beef"/>
</dbReference>
<dbReference type="DrugBank" id="DB09564">
    <property type="generic name" value="Insulin degludec"/>
</dbReference>
<dbReference type="DrugBank" id="DB01307">
    <property type="generic name" value="Insulin detemir"/>
</dbReference>
<dbReference type="DrugBank" id="DB00047">
    <property type="generic name" value="Insulin glargine"/>
</dbReference>
<dbReference type="DrugBank" id="DB01309">
    <property type="generic name" value="Insulin glulisine"/>
</dbReference>
<dbReference type="DrugBank" id="DB00030">
    <property type="generic name" value="Insulin human"/>
</dbReference>
<dbReference type="DrugBank" id="DB00046">
    <property type="generic name" value="Insulin lispro"/>
</dbReference>
<dbReference type="DrugBank" id="DB11567">
    <property type="generic name" value="Insulin peglispro"/>
</dbReference>
<dbReference type="DrugBank" id="DB00071">
    <property type="generic name" value="Insulin pork"/>
</dbReference>
<dbReference type="DrugBank" id="DB11568">
    <property type="generic name" value="Insulin tregopil"/>
</dbReference>
<dbReference type="DrugBank" id="DB05258">
    <property type="generic name" value="Interferon alfa"/>
</dbReference>
<dbReference type="DrugBank" id="DB00034">
    <property type="generic name" value="Interferon alfa-2a"/>
</dbReference>
<dbReference type="DrugBank" id="DB00105">
    <property type="generic name" value="Interferon alfa-2b"/>
</dbReference>
<dbReference type="DrugBank" id="DB15131">
    <property type="generic name" value="Interferon alfa-2c"/>
</dbReference>
<dbReference type="DrugBank" id="DB00011">
    <property type="generic name" value="Interferon alfa-n1"/>
</dbReference>
<dbReference type="DrugBank" id="DB00018">
    <property type="generic name" value="Interferon alfa-n3"/>
</dbReference>
<dbReference type="DrugBank" id="DB00069">
    <property type="generic name" value="Interferon alfacon-1"/>
</dbReference>
<dbReference type="DrugBank" id="DB00060">
    <property type="generic name" value="Interferon beta-1a"/>
</dbReference>
<dbReference type="DrugBank" id="DB00068">
    <property type="generic name" value="Interferon beta-1b"/>
</dbReference>
<dbReference type="DrugBank" id="DB00033">
    <property type="generic name" value="Interferon gamma-1b"/>
</dbReference>
<dbReference type="DrugBank" id="DB00951">
    <property type="generic name" value="Isoniazid"/>
</dbReference>
<dbReference type="DrugBank" id="DB11757">
    <property type="generic name" value="Istradefylline"/>
</dbReference>
<dbReference type="DrugBank" id="DB09570">
    <property type="generic name" value="Ixazomib"/>
</dbReference>
<dbReference type="DrugBank" id="DB01026">
    <property type="generic name" value="Ketoconazole"/>
</dbReference>
<dbReference type="DrugBank" id="DB01097">
    <property type="generic name" value="Leflunomide"/>
</dbReference>
<dbReference type="DrugBank" id="DB16217">
    <property type="generic name" value="Leniolisib"/>
</dbReference>
<dbReference type="DrugBank" id="DB09078">
    <property type="generic name" value="Lenvatinib"/>
</dbReference>
<dbReference type="DrugBank" id="DB01002">
    <property type="generic name" value="Levobupivacaine"/>
</dbReference>
<dbReference type="DrugBank" id="DB05667">
    <property type="generic name" value="Levoketoconazole"/>
</dbReference>
<dbReference type="DrugBank" id="DB00281">
    <property type="generic name" value="Lidocaine"/>
</dbReference>
<dbReference type="DrugBank" id="DB12406">
    <property type="generic name" value="Lisofylline"/>
</dbReference>
<dbReference type="DrugBank" id="DB09198">
    <property type="generic name" value="Lobeglitazone"/>
</dbReference>
<dbReference type="DrugBank" id="DB04948">
    <property type="generic name" value="Lofexidine"/>
</dbReference>
<dbReference type="DrugBank" id="DB00978">
    <property type="generic name" value="Lomefloxacin"/>
</dbReference>
<dbReference type="DrugBank" id="DB06448">
    <property type="generic name" value="Lonafarnib"/>
</dbReference>
<dbReference type="DrugBank" id="DB16220">
    <property type="generic name" value="Lonapegsomatropin"/>
</dbReference>
<dbReference type="DrugBank" id="DB01601">
    <property type="generic name" value="Lopinavir"/>
</dbReference>
<dbReference type="DrugBank" id="DB00455">
    <property type="generic name" value="Loratadine"/>
</dbReference>
<dbReference type="DrugBank" id="DB04871">
    <property type="generic name" value="Lorcaserin"/>
</dbReference>
<dbReference type="DrugBank" id="DB06077">
    <property type="generic name" value="Lumateperone"/>
</dbReference>
<dbReference type="DrugBank" id="DB01283">
    <property type="generic name" value="Lumiracoxib"/>
</dbReference>
<dbReference type="DrugBank" id="DB00772">
    <property type="generic name" value="Malathion"/>
</dbReference>
<dbReference type="DrugBank" id="DB00934">
    <property type="generic name" value="Maprotiline"/>
</dbReference>
<dbReference type="DrugBank" id="DB06234">
    <property type="generic name" value="Maribavir"/>
</dbReference>
<dbReference type="DrugBank" id="DB05501">
    <property type="generic name" value="Mavorixafor"/>
</dbReference>
<dbReference type="DrugBank" id="DB14009">
    <property type="generic name" value="Medical Cannabis"/>
</dbReference>
<dbReference type="DrugBank" id="DB00784">
    <property type="generic name" value="Mefenamic acid"/>
</dbReference>
<dbReference type="DrugBank" id="DB01065">
    <property type="generic name" value="Melatonin"/>
</dbReference>
<dbReference type="DrugBank" id="DB00170">
    <property type="generic name" value="Menadione"/>
</dbReference>
<dbReference type="DrugBank" id="DB00454">
    <property type="generic name" value="Meperidine"/>
</dbReference>
<dbReference type="DrugBank" id="DB00532">
    <property type="generic name" value="Mephenytoin"/>
</dbReference>
<dbReference type="DrugBank" id="DB00333">
    <property type="generic name" value="Methadone"/>
</dbReference>
<dbReference type="DrugBank" id="DB00763">
    <property type="generic name" value="Methimazole"/>
</dbReference>
<dbReference type="DrugBank" id="DB00553">
    <property type="generic name" value="Methoxsalen"/>
</dbReference>
<dbReference type="DrugBank" id="DB01028">
    <property type="generic name" value="Methoxyflurane"/>
</dbReference>
<dbReference type="DrugBank" id="DB09241">
    <property type="generic name" value="Methylene blue"/>
</dbReference>
<dbReference type="DrugBank" id="DB01233">
    <property type="generic name" value="Metoclopramide"/>
</dbReference>
<dbReference type="DrugBank" id="DB00379">
    <property type="generic name" value="Mexiletine"/>
</dbReference>
<dbReference type="DrugBank" id="DB06148">
    <property type="generic name" value="Mianserin"/>
</dbReference>
<dbReference type="DrugBank" id="DB01388">
    <property type="generic name" value="Mibefradil"/>
</dbReference>
<dbReference type="DrugBank" id="DB06595">
    <property type="generic name" value="Midostaurin"/>
</dbReference>
<dbReference type="DrugBank" id="DB00370">
    <property type="generic name" value="Mirtazapine"/>
</dbReference>
<dbReference type="DrugBank" id="DB16236">
    <property type="generic name" value="Mitapivat"/>
</dbReference>
<dbReference type="DrugBank" id="DB00745">
    <property type="generic name" value="Modafinil"/>
</dbReference>
<dbReference type="DrugBank" id="DB11763">
    <property type="generic name" value="Momelotinib"/>
</dbReference>
<dbReference type="DrugBank" id="DB00218">
    <property type="generic name" value="Moxifloxacin"/>
</dbReference>
<dbReference type="DrugBank" id="DB06510">
    <property type="generic name" value="Muraglitazar"/>
</dbReference>
<dbReference type="DrugBank" id="DB14011">
    <property type="generic name" value="Nabiximols"/>
</dbReference>
<dbReference type="DrugBank" id="DB00461">
    <property type="generic name" value="Nabumetone"/>
</dbReference>
<dbReference type="DrugBank" id="DB00607">
    <property type="generic name" value="Nafcillin"/>
</dbReference>
<dbReference type="DrugBank" id="DB00779">
    <property type="generic name" value="Nalidixic acid"/>
</dbReference>
<dbReference type="DrugBank" id="DB00788">
    <property type="generic name" value="Naproxen"/>
</dbReference>
<dbReference type="DrugBank" id="DB06600">
    <property type="generic name" value="Nemonoxacin"/>
</dbReference>
<dbReference type="DrugBank" id="DB00238">
    <property type="generic name" value="Nevirapine"/>
</dbReference>
<dbReference type="DrugBank" id="DB06803">
    <property type="generic name" value="Niclosamide"/>
</dbReference>
<dbReference type="DrugBank" id="DB00184">
    <property type="generic name" value="Nicotine"/>
</dbReference>
<dbReference type="DrugBank" id="DB01115">
    <property type="generic name" value="Nifedipine"/>
</dbReference>
<dbReference type="DrugBank" id="DB11793">
    <property type="generic name" value="Niraparib"/>
</dbReference>
<dbReference type="DrugBank" id="DB00435">
    <property type="generic name" value="Nitric Oxide"/>
</dbReference>
<dbReference type="DrugBank" id="DB05115">
    <property type="generic name" value="NN344"/>
</dbReference>
<dbReference type="DrugBank" id="DB00717">
    <property type="generic name" value="Norethisterone"/>
</dbReference>
<dbReference type="DrugBank" id="DB01059">
    <property type="generic name" value="Norfloxacin"/>
</dbReference>
<dbReference type="DrugBank" id="DB00540">
    <property type="generic name" value="Nortriptyline"/>
</dbReference>
<dbReference type="DrugBank" id="DB05990">
    <property type="generic name" value="Obeticholic acid"/>
</dbReference>
<dbReference type="DrugBank" id="DB01165">
    <property type="generic name" value="Ofloxacin"/>
</dbReference>
<dbReference type="DrugBank" id="DB00334">
    <property type="generic name" value="Olanzapine"/>
</dbReference>
<dbReference type="DrugBank" id="DB16267">
    <property type="generic name" value="Olutasidenib"/>
</dbReference>
<dbReference type="DrugBank" id="DB00338">
    <property type="generic name" value="Omeprazole"/>
</dbReference>
<dbReference type="DrugBank" id="DB00904">
    <property type="generic name" value="Ondansetron"/>
</dbReference>
<dbReference type="DrugBank" id="DB11632">
    <property type="generic name" value="Opicapone"/>
</dbReference>
<dbReference type="DrugBank" id="DB11443">
    <property type="generic name" value="Orbifloxacin"/>
</dbReference>
<dbReference type="DrugBank" id="DB01173">
    <property type="generic name" value="Orphenadrine"/>
</dbReference>
<dbReference type="DrugBank" id="DB11837">
    <property type="generic name" value="Osilodrostat"/>
</dbReference>
<dbReference type="DrugBank" id="DB09330">
    <property type="generic name" value="Osimertinib"/>
</dbReference>
<dbReference type="DrugBank" id="DB01303">
    <property type="generic name" value="Oxtriphylline"/>
</dbReference>
<dbReference type="DrugBank" id="DB11697">
    <property type="generic name" value="Pacritinib"/>
</dbReference>
<dbReference type="DrugBank" id="DB00377">
    <property type="generic name" value="Palonosetron"/>
</dbReference>
<dbReference type="DrugBank" id="DB00715">
    <property type="generic name" value="Paroxetine"/>
</dbReference>
<dbReference type="DrugBank" id="DB06589">
    <property type="generic name" value="Pazopanib"/>
</dbReference>
<dbReference type="DrugBank" id="DB11774">
    <property type="generic name" value="Pazufloxacin"/>
</dbReference>
<dbReference type="DrugBank" id="DB00487">
    <property type="generic name" value="Pefloxacin"/>
</dbReference>
<dbReference type="DrugBank" id="DB00008">
    <property type="generic name" value="Peginterferon alfa-2a"/>
</dbReference>
<dbReference type="DrugBank" id="DB00022">
    <property type="generic name" value="Peginterferon alfa-2b"/>
</dbReference>
<dbReference type="DrugBank" id="DB09122">
    <property type="generic name" value="Peginterferon beta-1a"/>
</dbReference>
<dbReference type="DrugBank" id="DB13634">
    <property type="generic name" value="Pentifylline"/>
</dbReference>
<dbReference type="DrugBank" id="DB00806">
    <property type="generic name" value="Pentoxifylline"/>
</dbReference>
<dbReference type="DrugBank" id="DB11198">
    <property type="generic name" value="Peppermint oil"/>
</dbReference>
<dbReference type="DrugBank" id="DB08883">
    <property type="generic name" value="Perampanel"/>
</dbReference>
<dbReference type="DrugBank" id="DB00850">
    <property type="generic name" value="Perphenazine"/>
</dbReference>
<dbReference type="DrugBank" id="DB03783">
    <property type="generic name" value="Phenacetin"/>
</dbReference>
<dbReference type="DrugBank" id="DB01174">
    <property type="generic name" value="Phenobarbital"/>
</dbReference>
<dbReference type="DrugBank" id="DB00388">
    <property type="generic name" value="Phenylephrine"/>
</dbReference>
<dbReference type="DrugBank" id="DB00252">
    <property type="generic name" value="Phenytoin"/>
</dbReference>
<dbReference type="DrugBank" id="DB11450">
    <property type="generic name" value="Pimobendan"/>
</dbReference>
<dbReference type="DrugBank" id="DB01100">
    <property type="generic name" value="Pimozide"/>
</dbReference>
<dbReference type="DrugBank" id="DB13823">
    <property type="generic name" value="Pipemidic acid"/>
</dbReference>
<dbReference type="DrugBank" id="DB04951">
    <property type="generic name" value="Pirfenidone"/>
</dbReference>
<dbReference type="DrugBank" id="DB17472">
    <property type="generic name" value="Pirtobrutinib"/>
</dbReference>
<dbReference type="DrugBank" id="DB11642">
    <property type="generic name" value="Pitolisant"/>
</dbReference>
<dbReference type="DrugBank" id="DB08910">
    <property type="generic name" value="Pomalidomide"/>
</dbReference>
<dbReference type="DrugBank" id="DB15822">
    <property type="generic name" value="Pralsetinib"/>
</dbReference>
<dbReference type="DrugBank" id="DB01058">
    <property type="generic name" value="Praziquantel"/>
</dbReference>
<dbReference type="DrugBank" id="DB01087">
    <property type="generic name" value="Primaquine"/>
</dbReference>
<dbReference type="DrugBank" id="DB00794">
    <property type="generic name" value="Primidone"/>
</dbReference>
<dbReference type="DrugBank" id="DB00420">
    <property type="generic name" value="Promazine"/>
</dbReference>
<dbReference type="DrugBank" id="DB09288">
    <property type="generic name" value="Propacetamol"/>
</dbReference>
<dbReference type="DrugBank" id="DB01182">
    <property type="generic name" value="Propafenone"/>
</dbReference>
<dbReference type="DrugBank" id="DB06479">
    <property type="generic name" value="Propentofylline"/>
</dbReference>
<dbReference type="DrugBank" id="DB00818">
    <property type="generic name" value="Propofol"/>
</dbReference>
<dbReference type="DrugBank" id="DB00571">
    <property type="generic name" value="Propranolol"/>
</dbReference>
<dbReference type="DrugBank" id="DB13449">
    <property type="generic name" value="Proxyphylline"/>
</dbReference>
<dbReference type="DrugBank" id="DB11892">
    <property type="generic name" value="Prulifloxacin"/>
</dbReference>
<dbReference type="DrugBank" id="DB04216">
    <property type="generic name" value="Quercetin"/>
</dbReference>
<dbReference type="DrugBank" id="DB00908">
    <property type="generic name" value="Quinidine"/>
</dbReference>
<dbReference type="DrugBank" id="DB00468">
    <property type="generic name" value="Quinine"/>
</dbReference>
<dbReference type="DrugBank" id="DB01129">
    <property type="generic name" value="Rabeprazole"/>
</dbReference>
<dbReference type="DrugBank" id="DB00980">
    <property type="generic name" value="Ramelteon"/>
</dbReference>
<dbReference type="DrugBank" id="DB09290">
    <property type="generic name" value="Ramosetron"/>
</dbReference>
<dbReference type="DrugBank" id="DB00863">
    <property type="generic name" value="Ranitidine"/>
</dbReference>
<dbReference type="DrugBank" id="DB01367">
    <property type="generic name" value="Rasagiline"/>
</dbReference>
<dbReference type="DrugBank" id="DB00409">
    <property type="generic name" value="Remoxipride"/>
</dbReference>
<dbReference type="DrugBank" id="DB02709">
    <property type="generic name" value="Resveratrol"/>
</dbReference>
<dbReference type="DrugBank" id="DB13174">
    <property type="generic name" value="Rhein"/>
</dbReference>
<dbReference type="DrugBank" id="DB01045">
    <property type="generic name" value="Rifampin"/>
</dbReference>
<dbReference type="DrugBank" id="DB11753">
    <property type="generic name" value="Rifamycin"/>
</dbReference>
<dbReference type="DrugBank" id="DB00740">
    <property type="generic name" value="Riluzole"/>
</dbReference>
<dbReference type="DrugBank" id="DB14924">
    <property type="generic name" value="Ritlecitinib"/>
</dbReference>
<dbReference type="DrugBank" id="DB00503">
    <property type="generic name" value="Ritonavir"/>
</dbReference>
<dbReference type="DrugBank" id="DB00533">
    <property type="generic name" value="Rofecoxib"/>
</dbReference>
<dbReference type="DrugBank" id="DB01656">
    <property type="generic name" value="Roflumilast"/>
</dbReference>
<dbReference type="DrugBank" id="DB15119">
    <property type="generic name" value="Ropeginterferon alfa-2b"/>
</dbReference>
<dbReference type="DrugBank" id="DB00268">
    <property type="generic name" value="Ropinirole"/>
</dbReference>
<dbReference type="DrugBank" id="DB00296">
    <property type="generic name" value="Ropivacaine"/>
</dbReference>
<dbReference type="DrugBank" id="DB00412">
    <property type="generic name" value="Rosiglitazone"/>
</dbReference>
<dbReference type="DrugBank" id="DB00817">
    <property type="generic name" value="Rosoxacin"/>
</dbReference>
<dbReference type="DrugBank" id="DB12332">
    <property type="generic name" value="Rucaparib"/>
</dbReference>
<dbReference type="DrugBank" id="DB13772">
    <property type="generic name" value="Rufloxacin"/>
</dbReference>
<dbReference type="DrugBank" id="DB06654">
    <property type="generic name" value="Safinamide"/>
</dbReference>
<dbReference type="DrugBank" id="DB11491">
    <property type="generic name" value="Sarafloxacin"/>
</dbReference>
<dbReference type="DrugBank" id="DB00418">
    <property type="generic name" value="Secobarbital"/>
</dbReference>
<dbReference type="DrugBank" id="DB01037">
    <property type="generic name" value="Selegiline"/>
</dbReference>
<dbReference type="DrugBank" id="DB11689">
    <property type="generic name" value="Selumetinib"/>
</dbReference>
<dbReference type="DrugBank" id="DB06290">
    <property type="generic name" value="Simeprevir"/>
</dbReference>
<dbReference type="DrugBank" id="DB13261">
    <property type="generic name" value="Sitafloxacin"/>
</dbReference>
<dbReference type="DrugBank" id="DB15093">
    <property type="generic name" value="Somapacitan"/>
</dbReference>
<dbReference type="DrugBank" id="DB00052">
    <property type="generic name" value="Somatotropin"/>
</dbReference>
<dbReference type="DrugBank" id="DB00398">
    <property type="generic name" value="Sorafenib"/>
</dbReference>
<dbReference type="DrugBank" id="DB01208">
    <property type="generic name" value="Sparfloxacin"/>
</dbReference>
<dbReference type="DrugBank" id="DB09118">
    <property type="generic name" value="Stiripentol"/>
</dbReference>
<dbReference type="DrugBank" id="DB00428">
    <property type="generic name" value="Streptozocin"/>
</dbReference>
<dbReference type="DrugBank" id="DB06820">
    <property type="generic name" value="Sulconazole"/>
</dbReference>
<dbReference type="DrugBank" id="DB00382">
    <property type="generic name" value="Tacrine"/>
</dbReference>
<dbReference type="DrugBank" id="DB00675">
    <property type="generic name" value="Tamoxifen"/>
</dbReference>
<dbReference type="DrugBank" id="DB06083">
    <property type="generic name" value="Tapinarof"/>
</dbReference>
<dbReference type="DrugBank" id="DB09071">
    <property type="generic name" value="Tasimelteon"/>
</dbReference>
<dbReference type="DrugBank" id="DB05488">
    <property type="generic name" value="Technetium Tc-99m ciprofloxacin"/>
</dbReference>
<dbReference type="DrugBank" id="DB09256">
    <property type="generic name" value="Tegafur"/>
</dbReference>
<dbReference type="DrugBank" id="DB01079">
    <property type="generic name" value="Tegaserod"/>
</dbReference>
<dbReference type="DrugBank" id="DB01405">
    <property type="generic name" value="Temafloxacin"/>
</dbReference>
<dbReference type="DrugBank" id="DB00857">
    <property type="generic name" value="Terbinafine"/>
</dbReference>
<dbReference type="DrugBank" id="DB08880">
    <property type="generic name" value="Teriflunomide"/>
</dbReference>
<dbReference type="DrugBank" id="DB11712">
    <property type="generic name" value="Tezacaftor"/>
</dbReference>
<dbReference type="DrugBank" id="DB01412">
    <property type="generic name" value="Theobromine"/>
</dbReference>
<dbReference type="DrugBank" id="DB00277">
    <property type="generic name" value="Theophylline"/>
</dbReference>
<dbReference type="DrugBank" id="DB00730">
    <property type="generic name" value="Thiabendazole"/>
</dbReference>
<dbReference type="DrugBank" id="DB01623">
    <property type="generic name" value="Thiothixene"/>
</dbReference>
<dbReference type="DrugBank" id="DB00208">
    <property type="generic name" value="Ticlopidine"/>
</dbReference>
<dbReference type="DrugBank" id="DB06137">
    <property type="generic name" value="Tirbanibulin"/>
</dbReference>
<dbReference type="DrugBank" id="DB00697">
    <property type="generic name" value="Tizanidine"/>
</dbReference>
<dbReference type="DrugBank" id="DB01056">
    <property type="generic name" value="Tocainide"/>
</dbReference>
<dbReference type="DrugBank" id="DB06264">
    <property type="generic name" value="Tolperisone"/>
</dbReference>
<dbReference type="DrugBank" id="DB15266">
    <property type="generic name" value="Tovorafenib"/>
</dbReference>
<dbReference type="DrugBank" id="DB00752">
    <property type="generic name" value="Tranylcypromine"/>
</dbReference>
<dbReference type="DrugBank" id="DB00384">
    <property type="generic name" value="Triamterene"/>
</dbReference>
<dbReference type="DrugBank" id="DB12245">
    <property type="generic name" value="Triclabendazole"/>
</dbReference>
<dbReference type="DrugBank" id="DB00831">
    <property type="generic name" value="Trifluoperazine"/>
</dbReference>
<dbReference type="DrugBank" id="DB15442">
    <property type="generic name" value="Trilaciclib"/>
</dbReference>
<dbReference type="DrugBank" id="DB00440">
    <property type="generic name" value="Trimethoprim"/>
</dbReference>
<dbReference type="DrugBank" id="DB00685">
    <property type="generic name" value="Trovafloxacin"/>
</dbReference>
<dbReference type="DrugBank" id="DB08867">
    <property type="generic name" value="Ulipristal"/>
</dbReference>
<dbReference type="DrugBank" id="DB14989">
    <property type="generic name" value="Umbralisib"/>
</dbReference>
<dbReference type="DrugBank" id="DB13609">
    <property type="generic name" value="Umifenovir"/>
</dbReference>
<dbReference type="DrugBank" id="DB06235">
    <property type="generic name" value="Vadimezan"/>
</dbReference>
<dbReference type="DrugBank" id="DB00313">
    <property type="generic name" value="Valproic acid"/>
</dbReference>
<dbReference type="DrugBank" id="DB08881">
    <property type="generic name" value="Vemurafenib"/>
</dbReference>
<dbReference type="DrugBank" id="DB00661">
    <property type="generic name" value="Verapamil"/>
</dbReference>
<dbReference type="DrugBank" id="DB09185">
    <property type="generic name" value="Viloxazine"/>
</dbReference>
<dbReference type="DrugBank" id="DB17097">
    <property type="generic name" value="Vorasidenib"/>
</dbReference>
<dbReference type="DrugBank" id="DB12026">
    <property type="generic name" value="Voxilaprevir"/>
</dbReference>
<dbReference type="DrugBank" id="DB00682">
    <property type="generic name" value="Warfarin"/>
</dbReference>
<dbReference type="DrugBank" id="DB15357">
    <property type="generic name" value="Xanomeline"/>
</dbReference>
<dbReference type="DrugBank" id="DB02134">
    <property type="generic name" value="Xanthine"/>
</dbReference>
<dbReference type="DrugBank" id="DB00549">
    <property type="generic name" value="Zafirlukast"/>
</dbReference>
<dbReference type="DrugBank" id="DB00744">
    <property type="generic name" value="Zileuton"/>
</dbReference>
<dbReference type="DrugBank" id="DB00315">
    <property type="generic name" value="Zolmitriptan"/>
</dbReference>
<dbReference type="DrugBank" id="DB00425">
    <property type="generic name" value="Zolpidem"/>
</dbReference>
<dbReference type="DrugBank" id="DB09225">
    <property type="generic name" value="Zotepine"/>
</dbReference>
<dbReference type="DrugBank" id="DB09120">
    <property type="generic name" value="Zucapsaicin"/>
</dbReference>
<dbReference type="DrugCentral" id="P05177"/>
<dbReference type="GuidetoPHARMACOLOGY" id="1319"/>
<dbReference type="SwissLipids" id="SLP:000001202"/>
<dbReference type="GlyCosmos" id="P05177">
    <property type="glycosylation" value="1 site, No reported glycans"/>
</dbReference>
<dbReference type="GlyGen" id="P05177">
    <property type="glycosylation" value="1 site"/>
</dbReference>
<dbReference type="iPTMnet" id="P05177"/>
<dbReference type="PhosphoSitePlus" id="P05177"/>
<dbReference type="BioMuta" id="CYP1A2"/>
<dbReference type="DMDM" id="117144"/>
<dbReference type="jPOST" id="P05177"/>
<dbReference type="MassIVE" id="P05177"/>
<dbReference type="PaxDb" id="9606-ENSP00000342007"/>
<dbReference type="PeptideAtlas" id="P05177"/>
<dbReference type="Antibodypedia" id="4221">
    <property type="antibodies" value="777 antibodies from 37 providers"/>
</dbReference>
<dbReference type="DNASU" id="1544"/>
<dbReference type="Ensembl" id="ENST00000343932.5">
    <property type="protein sequence ID" value="ENSP00000342007.4"/>
    <property type="gene ID" value="ENSG00000140505.7"/>
</dbReference>
<dbReference type="GeneID" id="1544"/>
<dbReference type="KEGG" id="hsa:1544"/>
<dbReference type="MANE-Select" id="ENST00000343932.5">
    <property type="protein sequence ID" value="ENSP00000342007.4"/>
    <property type="RefSeq nucleotide sequence ID" value="NM_000761.5"/>
    <property type="RefSeq protein sequence ID" value="NP_000752.2"/>
</dbReference>
<dbReference type="UCSC" id="uc002ayr.2">
    <property type="organism name" value="human"/>
</dbReference>
<dbReference type="AGR" id="HGNC:2596"/>
<dbReference type="CTD" id="1544"/>
<dbReference type="DisGeNET" id="1544"/>
<dbReference type="GeneCards" id="CYP1A2"/>
<dbReference type="HGNC" id="HGNC:2596">
    <property type="gene designation" value="CYP1A2"/>
</dbReference>
<dbReference type="HPA" id="ENSG00000140505">
    <property type="expression patterns" value="Tissue enriched (liver)"/>
</dbReference>
<dbReference type="MalaCards" id="CYP1A2"/>
<dbReference type="MIM" id="108330">
    <property type="type" value="gene"/>
</dbReference>
<dbReference type="MIM" id="124060">
    <property type="type" value="gene+phenotype"/>
</dbReference>
<dbReference type="neXtProt" id="NX_P05177"/>
<dbReference type="OpenTargets" id="ENSG00000140505"/>
<dbReference type="PharmGKB" id="PA27093"/>
<dbReference type="VEuPathDB" id="HostDB:ENSG00000140505"/>
<dbReference type="eggNOG" id="KOG0156">
    <property type="taxonomic scope" value="Eukaryota"/>
</dbReference>
<dbReference type="GeneTree" id="ENSGT00950000183037"/>
<dbReference type="HOGENOM" id="CLU_001570_22_0_1"/>
<dbReference type="InParanoid" id="P05177"/>
<dbReference type="OMA" id="AKWEIFL"/>
<dbReference type="OrthoDB" id="1055148at2759"/>
<dbReference type="PAN-GO" id="P05177">
    <property type="GO annotations" value="2 GO annotations based on evolutionary models"/>
</dbReference>
<dbReference type="PhylomeDB" id="P05177"/>
<dbReference type="TreeFam" id="TF105095"/>
<dbReference type="BioCyc" id="MetaCyc:HS06728-MONOMER"/>
<dbReference type="BRENDA" id="1.14.14.1">
    <property type="organism ID" value="2681"/>
</dbReference>
<dbReference type="BRENDA" id="1.14.99.38">
    <property type="organism ID" value="2681"/>
</dbReference>
<dbReference type="PathwayCommons" id="P05177"/>
<dbReference type="Reactome" id="R-HSA-156581">
    <property type="pathway name" value="Methylation"/>
</dbReference>
<dbReference type="Reactome" id="R-HSA-211957">
    <property type="pathway name" value="Aromatic amines can be N-hydroxylated or N-dealkylated by CYP1A2"/>
</dbReference>
<dbReference type="Reactome" id="R-HSA-2142670">
    <property type="pathway name" value="Synthesis of epoxy (EET) and dihydroxyeicosatrienoic acids (DHET)"/>
</dbReference>
<dbReference type="Reactome" id="R-HSA-2142816">
    <property type="pathway name" value="Synthesis of (16-20)-hydroxyeicosatetraenoic acids (HETE)"/>
</dbReference>
<dbReference type="Reactome" id="R-HSA-5423646">
    <property type="pathway name" value="Aflatoxin activation and detoxification"/>
</dbReference>
<dbReference type="Reactome" id="R-HSA-9018681">
    <property type="pathway name" value="Biosynthesis of protectins"/>
</dbReference>
<dbReference type="Reactome" id="R-HSA-9027307">
    <property type="pathway name" value="Biosynthesis of maresin-like SPMs"/>
</dbReference>
<dbReference type="SABIO-RK" id="P05177"/>
<dbReference type="SignaLink" id="P05177"/>
<dbReference type="UniPathway" id="UPA00296"/>
<dbReference type="UniPathway" id="UPA00383"/>
<dbReference type="UniPathway" id="UPA00912"/>
<dbReference type="BioGRID-ORCS" id="1544">
    <property type="hits" value="14 hits in 1148 CRISPR screens"/>
</dbReference>
<dbReference type="EvolutionaryTrace" id="P05177"/>
<dbReference type="GeneWiki" id="CYP1A2"/>
<dbReference type="GenomeRNAi" id="1544"/>
<dbReference type="Pharos" id="P05177">
    <property type="development level" value="Tchem"/>
</dbReference>
<dbReference type="PRO" id="PR:P05177"/>
<dbReference type="Proteomes" id="UP000005640">
    <property type="component" value="Chromosome 15"/>
</dbReference>
<dbReference type="RNAct" id="P05177">
    <property type="molecule type" value="protein"/>
</dbReference>
<dbReference type="Bgee" id="ENSG00000140505">
    <property type="expression patterns" value="Expressed in buccal mucosa cell and 97 other cell types or tissues"/>
</dbReference>
<dbReference type="GO" id="GO:0005789">
    <property type="term" value="C:endoplasmic reticulum membrane"/>
    <property type="evidence" value="ECO:0000304"/>
    <property type="project" value="Reactome"/>
</dbReference>
<dbReference type="GO" id="GO:0043231">
    <property type="term" value="C:intracellular membrane-bounded organelle"/>
    <property type="evidence" value="ECO:0000314"/>
    <property type="project" value="UniProtKB"/>
</dbReference>
<dbReference type="GO" id="GO:0034875">
    <property type="term" value="F:caffeine oxidase activity"/>
    <property type="evidence" value="ECO:0000314"/>
    <property type="project" value="BHF-UCL"/>
</dbReference>
<dbReference type="GO" id="GO:0032451">
    <property type="term" value="F:demethylase activity"/>
    <property type="evidence" value="ECO:0000314"/>
    <property type="project" value="UniProtKB"/>
</dbReference>
<dbReference type="GO" id="GO:0009055">
    <property type="term" value="F:electron transfer activity"/>
    <property type="evidence" value="ECO:0000304"/>
    <property type="project" value="UniProtKB"/>
</dbReference>
<dbReference type="GO" id="GO:0019899">
    <property type="term" value="F:enzyme binding"/>
    <property type="evidence" value="ECO:0000353"/>
    <property type="project" value="BHF-UCL"/>
</dbReference>
<dbReference type="GO" id="GO:0101020">
    <property type="term" value="F:estrogen 16-alpha-hydroxylase activity"/>
    <property type="evidence" value="ECO:0000314"/>
    <property type="project" value="UniProtKB"/>
</dbReference>
<dbReference type="GO" id="GO:0101021">
    <property type="term" value="F:estrogen 2-hydroxylase activity"/>
    <property type="evidence" value="ECO:0000314"/>
    <property type="project" value="UniProtKB"/>
</dbReference>
<dbReference type="GO" id="GO:0020037">
    <property type="term" value="F:heme binding"/>
    <property type="evidence" value="ECO:0000314"/>
    <property type="project" value="UniProtKB"/>
</dbReference>
<dbReference type="GO" id="GO:0106256">
    <property type="term" value="F:hydroperoxy icosatetraenoate dehydratase activity"/>
    <property type="evidence" value="ECO:0007669"/>
    <property type="project" value="UniProtKB-EC"/>
</dbReference>
<dbReference type="GO" id="GO:0005506">
    <property type="term" value="F:iron ion binding"/>
    <property type="evidence" value="ECO:0007669"/>
    <property type="project" value="InterPro"/>
</dbReference>
<dbReference type="GO" id="GO:0004497">
    <property type="term" value="F:monooxygenase activity"/>
    <property type="evidence" value="ECO:0000314"/>
    <property type="project" value="BHF-UCL"/>
</dbReference>
<dbReference type="GO" id="GO:0016491">
    <property type="term" value="F:oxidoreductase activity"/>
    <property type="evidence" value="ECO:0000314"/>
    <property type="project" value="BHF-UCL"/>
</dbReference>
<dbReference type="GO" id="GO:0016712">
    <property type="term" value="F:oxidoreductase activity, acting on paired donors, with incorporation or reduction of molecular oxygen, reduced flavin or flavoprotein as one donor, and incorporation of one atom of oxygen"/>
    <property type="evidence" value="ECO:0000315"/>
    <property type="project" value="UniProtKB"/>
</dbReference>
<dbReference type="GO" id="GO:0046222">
    <property type="term" value="P:aflatoxin metabolic process"/>
    <property type="evidence" value="ECO:0000304"/>
    <property type="project" value="Reactome"/>
</dbReference>
<dbReference type="GO" id="GO:0009820">
    <property type="term" value="P:alkaloid metabolic process"/>
    <property type="evidence" value="ECO:0000314"/>
    <property type="project" value="BHF-UCL"/>
</dbReference>
<dbReference type="GO" id="GO:0045333">
    <property type="term" value="P:cellular respiration"/>
    <property type="evidence" value="ECO:0007669"/>
    <property type="project" value="Ensembl"/>
</dbReference>
<dbReference type="GO" id="GO:0071276">
    <property type="term" value="P:cellular response to cadmium ion"/>
    <property type="evidence" value="ECO:0007669"/>
    <property type="project" value="Ensembl"/>
</dbReference>
<dbReference type="GO" id="GO:0008203">
    <property type="term" value="P:cholesterol metabolic process"/>
    <property type="evidence" value="ECO:0007669"/>
    <property type="project" value="UniProtKB-UniPathway"/>
</dbReference>
<dbReference type="GO" id="GO:0018894">
    <property type="term" value="P:dibenzo-p-dioxin metabolic process"/>
    <property type="evidence" value="ECO:0007669"/>
    <property type="project" value="Ensembl"/>
</dbReference>
<dbReference type="GO" id="GO:0019373">
    <property type="term" value="P:epoxygenase P450 pathway"/>
    <property type="evidence" value="ECO:0000304"/>
    <property type="project" value="Reactome"/>
</dbReference>
<dbReference type="GO" id="GO:0008210">
    <property type="term" value="P:estrogen metabolic process"/>
    <property type="evidence" value="ECO:0000314"/>
    <property type="project" value="UniProtKB"/>
</dbReference>
<dbReference type="GO" id="GO:0050665">
    <property type="term" value="P:hydrogen peroxide biosynthetic process"/>
    <property type="evidence" value="ECO:0007669"/>
    <property type="project" value="Ensembl"/>
</dbReference>
<dbReference type="GO" id="GO:0042759">
    <property type="term" value="P:long-chain fatty acid biosynthetic process"/>
    <property type="evidence" value="ECO:0000304"/>
    <property type="project" value="Reactome"/>
</dbReference>
<dbReference type="GO" id="GO:0030324">
    <property type="term" value="P:lung development"/>
    <property type="evidence" value="ECO:0007669"/>
    <property type="project" value="Ensembl"/>
</dbReference>
<dbReference type="GO" id="GO:0032259">
    <property type="term" value="P:methylation"/>
    <property type="evidence" value="ECO:0000304"/>
    <property type="project" value="Reactome"/>
</dbReference>
<dbReference type="GO" id="GO:0032787">
    <property type="term" value="P:monocarboxylic acid metabolic process"/>
    <property type="evidence" value="ECO:0000314"/>
    <property type="project" value="BHF-UCL"/>
</dbReference>
<dbReference type="GO" id="GO:0016098">
    <property type="term" value="P:monoterpenoid metabolic process"/>
    <property type="evidence" value="ECO:0000314"/>
    <property type="project" value="BHF-UCL"/>
</dbReference>
<dbReference type="GO" id="GO:0097267">
    <property type="term" value="P:omega-hydroxylase P450 pathway"/>
    <property type="evidence" value="ECO:0000304"/>
    <property type="project" value="Reactome"/>
</dbReference>
<dbReference type="GO" id="GO:0070989">
    <property type="term" value="P:oxidative demethylation"/>
    <property type="evidence" value="ECO:0000314"/>
    <property type="project" value="BHF-UCL"/>
</dbReference>
<dbReference type="GO" id="GO:0006778">
    <property type="term" value="P:porphyrin-containing compound metabolic process"/>
    <property type="evidence" value="ECO:0007669"/>
    <property type="project" value="Ensembl"/>
</dbReference>
<dbReference type="GO" id="GO:0009791">
    <property type="term" value="P:post-embryonic development"/>
    <property type="evidence" value="ECO:0007669"/>
    <property type="project" value="Ensembl"/>
</dbReference>
<dbReference type="GO" id="GO:0010468">
    <property type="term" value="P:regulation of gene expression"/>
    <property type="evidence" value="ECO:0007669"/>
    <property type="project" value="Ensembl"/>
</dbReference>
<dbReference type="GO" id="GO:0042572">
    <property type="term" value="P:retinol metabolic process"/>
    <property type="evidence" value="ECO:0000314"/>
    <property type="project" value="UniProtKB"/>
</dbReference>
<dbReference type="GO" id="GO:0006706">
    <property type="term" value="P:steroid catabolic process"/>
    <property type="evidence" value="ECO:0000315"/>
    <property type="project" value="BHF-UCL"/>
</dbReference>
<dbReference type="GO" id="GO:0009403">
    <property type="term" value="P:toxin biosynthetic process"/>
    <property type="evidence" value="ECO:0000314"/>
    <property type="project" value="BHF-UCL"/>
</dbReference>
<dbReference type="GO" id="GO:0042178">
    <property type="term" value="P:xenobiotic catabolic process"/>
    <property type="evidence" value="ECO:0000314"/>
    <property type="project" value="BHF-UCL"/>
</dbReference>
<dbReference type="GO" id="GO:0006805">
    <property type="term" value="P:xenobiotic metabolic process"/>
    <property type="evidence" value="ECO:0000314"/>
    <property type="project" value="BHF-UCL"/>
</dbReference>
<dbReference type="CDD" id="cd20676">
    <property type="entry name" value="CYP1A"/>
    <property type="match status" value="1"/>
</dbReference>
<dbReference type="FunFam" id="1.10.630.10:FF:000002">
    <property type="entry name" value="Cytochrome P450 1A1"/>
    <property type="match status" value="1"/>
</dbReference>
<dbReference type="Gene3D" id="1.10.630.10">
    <property type="entry name" value="Cytochrome P450"/>
    <property type="match status" value="1"/>
</dbReference>
<dbReference type="InterPro" id="IPR001128">
    <property type="entry name" value="Cyt_P450"/>
</dbReference>
<dbReference type="InterPro" id="IPR017972">
    <property type="entry name" value="Cyt_P450_CS"/>
</dbReference>
<dbReference type="InterPro" id="IPR002401">
    <property type="entry name" value="Cyt_P450_E_grp-I"/>
</dbReference>
<dbReference type="InterPro" id="IPR008066">
    <property type="entry name" value="Cyt_P450_E_grp-I_CYP1"/>
</dbReference>
<dbReference type="InterPro" id="IPR036396">
    <property type="entry name" value="Cyt_P450_sf"/>
</dbReference>
<dbReference type="PANTHER" id="PTHR24289:SF21">
    <property type="entry name" value="CYTOCHROME P450 1A"/>
    <property type="match status" value="1"/>
</dbReference>
<dbReference type="PANTHER" id="PTHR24289">
    <property type="entry name" value="STEROID 17-ALPHA-HYDROXYLASE/17,20 LYASE"/>
    <property type="match status" value="1"/>
</dbReference>
<dbReference type="Pfam" id="PF00067">
    <property type="entry name" value="p450"/>
    <property type="match status" value="1"/>
</dbReference>
<dbReference type="PRINTS" id="PR00463">
    <property type="entry name" value="EP450I"/>
</dbReference>
<dbReference type="PRINTS" id="PR01683">
    <property type="entry name" value="EP450ICYP1A"/>
</dbReference>
<dbReference type="PRINTS" id="PR00385">
    <property type="entry name" value="P450"/>
</dbReference>
<dbReference type="SUPFAM" id="SSF48264">
    <property type="entry name" value="Cytochrome P450"/>
    <property type="match status" value="1"/>
</dbReference>
<dbReference type="PROSITE" id="PS00086">
    <property type="entry name" value="CYTOCHROME_P450"/>
    <property type="match status" value="1"/>
</dbReference>
<gene>
    <name evidence="21 31" type="primary">CYP1A2</name>
</gene>
<reference key="1">
    <citation type="journal article" date="1986" name="Nucleic Acids Res.">
        <title>Human P3(450): cDNA and complete amino acid sequence.</title>
        <authorList>
            <person name="Jaiswal A.K."/>
            <person name="Nebert D.W."/>
            <person name="Gonzalez F.J."/>
        </authorList>
    </citation>
    <scope>NUCLEOTIDE SEQUENCE [MRNA]</scope>
</reference>
<reference key="2">
    <citation type="journal article" date="1986" name="Proc. Natl. Acad. Sci. U.S.A.">
        <title>Human cytochrome P-450 4 mRNA and gene: part of a multigene family that contains Alu sequences in its mRNA.</title>
        <authorList>
            <person name="Quattrochi L.C."/>
            <person name="Pendurthi U.R."/>
            <person name="Okino S.T."/>
            <person name="Potenza C."/>
            <person name="Tukey R.H."/>
        </authorList>
    </citation>
    <scope>NUCLEOTIDE SEQUENCE [GENOMIC DNA / MRNA]</scope>
</reference>
<reference key="3">
    <citation type="journal article" date="1989" name="Mol. Endocrinol.">
        <title>Human CYP1A2: sequence, gene structure, comparison with the mouse and rat orthologous gene, and differences in liver 1A2 mRNA expression.</title>
        <authorList>
            <person name="Ikeya K."/>
            <person name="Jaiswal A.K."/>
            <person name="Owens R.A."/>
            <person name="Jones J.E."/>
            <person name="Nebert D.W."/>
            <person name="Kimura S."/>
        </authorList>
    </citation>
    <scope>NUCLEOTIDE SEQUENCE [GENOMIC DNA]</scope>
</reference>
<reference key="4">
    <citation type="journal article" date="1987" name="J. Exp. Pathol.">
        <title>Human P(3)450: cDNA and complete protein sequence, repetitive Alu sequences in the 3' nontranslated region, and localization of gene to chromosome 15.</title>
        <authorList>
            <person name="Jaiswal A.K."/>
            <person name="Nebert D.W."/>
            <person name="McBride O.W."/>
            <person name="Gonzalez F.J."/>
        </authorList>
    </citation>
    <scope>NUCLEOTIDE SEQUENCE [MRNA]</scope>
    <source>
        <tissue>Liver</tissue>
    </source>
</reference>
<reference key="5">
    <citation type="submission" date="1999-09" db="EMBL/GenBank/DDBJ databases">
        <title>Sequence of a new human cytochrome P450-1A2 cDNA.</title>
        <authorList>
            <person name="Zhuge J."/>
            <person name="Qian Y."/>
            <person name="Xie H."/>
            <person name="Yu Y."/>
        </authorList>
    </citation>
    <scope>NUCLEOTIDE SEQUENCE [MRNA]</scope>
    <scope>VARIANT VAL-314</scope>
    <source>
        <tissue>Liver</tissue>
    </source>
</reference>
<reference key="6">
    <citation type="journal article" date="2001" name="Pharmacogenetics">
        <title>Organization of the CYP1A cluster on human chromosome 15: implications for gene regulation.</title>
        <authorList>
            <person name="Corchero J."/>
            <person name="Pimprale S."/>
            <person name="Kimura S."/>
            <person name="Gonzalez F.J."/>
        </authorList>
    </citation>
    <scope>NUCLEOTIDE SEQUENCE [GENOMIC DNA]</scope>
</reference>
<reference key="7">
    <citation type="submission" date="2005-04" db="EMBL/GenBank/DDBJ databases">
        <authorList>
            <consortium name="NIEHS SNPs program"/>
        </authorList>
    </citation>
    <scope>NUCLEOTIDE SEQUENCE [GENOMIC DNA]</scope>
    <scope>VARIANTS ARG-73; ASN-104; PHE-111; VAL-205; TRP-281 AND ILE-438</scope>
</reference>
<reference key="8">
    <citation type="journal article" date="2004" name="Genome Res.">
        <title>The status, quality, and expansion of the NIH full-length cDNA project: the Mammalian Gene Collection (MGC).</title>
        <authorList>
            <consortium name="The MGC Project Team"/>
        </authorList>
    </citation>
    <scope>NUCLEOTIDE SEQUENCE [LARGE SCALE MRNA]</scope>
</reference>
<reference key="9">
    <citation type="journal article" date="1986" name="Mol. Pharmacol.">
        <title>Identification of a human liver cytochrome P-450 homologous to the major isosafrole-inducible cytochrome P-450 in the rat.</title>
        <authorList>
            <person name="Wrighton S.A."/>
            <person name="Campanile C."/>
            <person name="Thomas P.E."/>
            <person name="Maines S.L."/>
            <person name="Watkins P.B."/>
            <person name="Parker G."/>
            <person name="Mendez-Picon G."/>
            <person name="Haniu M."/>
            <person name="Shively J.E."/>
            <person name="Levin W."/>
            <person name="Guzelian P.S."/>
        </authorList>
    </citation>
    <scope>PROTEIN SEQUENCE OF 2-19</scope>
</reference>
<reference key="10">
    <citation type="journal article" date="1985" name="DNA">
        <title>Cloning and isolation of human cytochrome P-450 cDNAs homologous to dioxin-inducible rabbit mRNAs encoding P-450 4 and P-450 6.</title>
        <authorList>
            <person name="Quattrochi L.C."/>
            <person name="Okino S.T."/>
            <person name="Pendurthi U.R."/>
            <person name="Tukey R.H."/>
        </authorList>
    </citation>
    <scope>NUCLEOTIDE SEQUENCE [MRNA] OF 295-485</scope>
    <source>
        <tissue>Liver</tissue>
    </source>
</reference>
<reference key="11">
    <citation type="journal article" date="1998" name="J. Pharmacol. Exp. Ther.">
        <title>Cytochromes P450 with bisallylic hydroxylation activity on arachidonic and linoleic acids studied with human recombinant enzymes and with human and rat liver microsomes.</title>
        <authorList>
            <person name="Bylund J."/>
            <person name="Kunz T."/>
            <person name="Valmsen K."/>
            <person name="Oliw E.H."/>
        </authorList>
    </citation>
    <scope>FUNCTION</scope>
    <scope>CATALYTIC ACTIVITY</scope>
    <scope>PATHWAY</scope>
</reference>
<reference key="12">
    <citation type="journal article" date="2000" name="Drug Metab. Dispos.">
        <title>Biosynthesis of all-trans-retinoic acid from all-trans-retinol: catalysis of all-trans-retinol oxidation by human P-450 cytochromes.</title>
        <authorList>
            <person name="Chen H."/>
            <person name="Howald W.N."/>
            <person name="Juchau M.R."/>
        </authorList>
    </citation>
    <scope>FUNCTION</scope>
    <scope>CATALYTIC ACTIVITY</scope>
    <scope>PATHWAY</scope>
    <scope>BIOPHYSICOCHEMICAL PROPERTIES</scope>
</reference>
<reference key="13">
    <citation type="journal article" date="2001" name="Metabolism">
        <title>Role of human cytochrome P450 1A1, 1A2, 1B1, and 3A4 in the 2-, 4-, and 16alpha-hydroxylation of 17beta-estradiol.</title>
        <authorList>
            <person name="Badawi A.F."/>
            <person name="Cavalieri E.L."/>
            <person name="Rogan E.G."/>
        </authorList>
    </citation>
    <scope>FUNCTION</scope>
    <scope>CATALYTIC ACTIVITY</scope>
    <scope>BIOPHYSICOCHEMICAL PROPERTIES</scope>
</reference>
<reference key="14">
    <citation type="journal article" date="2003" name="Endocrinology">
        <title>Characterization of the oxidative metabolites of 17beta-estradiol and estrone formed by 15 selectively expressed human cytochrome p450 isoforms.</title>
        <authorList>
            <person name="Lee A.J."/>
            <person name="Cai M.X."/>
            <person name="Thomas P.E."/>
            <person name="Conney A.H."/>
            <person name="Zhu B.T."/>
        </authorList>
    </citation>
    <scope>FUNCTION</scope>
    <scope>CATALYTIC ACTIVITY</scope>
</reference>
<reference key="15">
    <citation type="journal article" date="2004" name="Arch. Biochem. Biophys.">
        <title>Functional characterization of four allelic variants of human cytochrome P450 1A2.</title>
        <authorList>
            <person name="Zhou H."/>
            <person name="Josephy P.D."/>
            <person name="Kim D."/>
            <person name="Guengerich F.P."/>
        </authorList>
    </citation>
    <scope>FUNCTION</scope>
    <scope>BIOPHYSICOCHEMICAL PROPERTIES</scope>
    <scope>CHARACTERIZATION OF VARIANTS ASN-348; PHE-386; TYR-406 AND TRP-431</scope>
</reference>
<reference key="16">
    <citation type="journal article" date="2010" name="J. Lipid Res.">
        <title>Stereoselective epoxidation of the last double bond of polyunsaturated fatty acids by human cytochromes P450.</title>
        <authorList>
            <person name="Lucas D."/>
            <person name="Goulitquer S."/>
            <person name="Marienhagen J."/>
            <person name="Fer M."/>
            <person name="Dreano Y."/>
            <person name="Schwaneberg U."/>
            <person name="Amet Y."/>
            <person name="Corcos L."/>
        </authorList>
    </citation>
    <scope>FUNCTION</scope>
    <scope>CATALYTIC ACTIVITY</scope>
    <scope>PATHWAY</scope>
</reference>
<reference key="17">
    <citation type="journal article" date="2011" name="Drug Metab. Dispos.">
        <title>Human CYP2S1 metabolizes cyclooxygenase- and lipoxygenase-derived eicosanoids.</title>
        <authorList>
            <person name="Bui P."/>
            <person name="Imaizumi S."/>
            <person name="Beedanagari S.R."/>
            <person name="Reddy S.T."/>
            <person name="Hankinson O."/>
        </authorList>
    </citation>
    <scope>FUNCTION</scope>
    <scope>CATALYTIC ACTIVITY</scope>
    <scope>PATHWAY</scope>
</reference>
<reference key="18">
    <citation type="journal article" date="2011" name="J. Lipid Res.">
        <title>Cholesterol 25-hydroxylation activity of CYP3A.</title>
        <authorList>
            <person name="Honda A."/>
            <person name="Miyazaki T."/>
            <person name="Ikegami T."/>
            <person name="Iwamoto J."/>
            <person name="Maeda T."/>
            <person name="Hirayama T."/>
            <person name="Saito Y."/>
            <person name="Teramoto T."/>
            <person name="Matsuzaki Y."/>
        </authorList>
    </citation>
    <scope>FUNCTION</scope>
    <scope>CATALYTIC ACTIVITY</scope>
    <scope>SUBCELLULAR LOCATION</scope>
    <scope>PATHWAY</scope>
</reference>
<reference key="19">
    <citation type="journal article" date="2014" name="J. Proteomics">
        <title>An enzyme assisted RP-RPLC approach for in-depth analysis of human liver phosphoproteome.</title>
        <authorList>
            <person name="Bian Y."/>
            <person name="Song C."/>
            <person name="Cheng K."/>
            <person name="Dong M."/>
            <person name="Wang F."/>
            <person name="Huang J."/>
            <person name="Sun D."/>
            <person name="Wang L."/>
            <person name="Ye M."/>
            <person name="Zou H."/>
        </authorList>
    </citation>
    <scope>IDENTIFICATION BY MASS SPECTROMETRY [LARGE SCALE ANALYSIS]</scope>
    <source>
        <tissue>Liver</tissue>
    </source>
</reference>
<reference key="20">
    <citation type="journal article" date="2016" name="Nat. Commun.">
        <title>Haem-dependent dimerization of PGRMC1/Sigma-2 receptor facilitates cancer proliferation and chemoresistance.</title>
        <authorList>
            <person name="Kabe Y."/>
            <person name="Nakane T."/>
            <person name="Koike I."/>
            <person name="Yamamoto T."/>
            <person name="Sugiura Y."/>
            <person name="Harada E."/>
            <person name="Sugase K."/>
            <person name="Shimamura T."/>
            <person name="Ohmura M."/>
            <person name="Muraoka K."/>
            <person name="Yamamoto A."/>
            <person name="Uchida T."/>
            <person name="Iwata S."/>
            <person name="Yamaguchi Y."/>
            <person name="Krayukhina E."/>
            <person name="Noda M."/>
            <person name="Handa H."/>
            <person name="Ishimori K."/>
            <person name="Uchiyama S."/>
            <person name="Kobayashi T."/>
            <person name="Suematsu M."/>
        </authorList>
    </citation>
    <scope>INTERACTION WITH PGRMC1</scope>
</reference>
<reference key="21">
    <citation type="journal article" date="2007" name="J. Biol. Chem.">
        <title>Adaptations for the oxidation of polycyclic aromatic hydrocarbons exhibited by the structure of human P450 1A2.</title>
        <authorList>
            <person name="Sansen S."/>
            <person name="Yano J.K."/>
            <person name="Reynald R.L."/>
            <person name="Schoch G.A."/>
            <person name="Griffin K.J."/>
            <person name="Stout C.D."/>
            <person name="Johnson E.F."/>
        </authorList>
    </citation>
    <scope>X-RAY CRYSTALLOGRAPHY (1.95 ANGSTROMS) OF 27-515 IN COMPLEX WITH THE INHIBITOR ALPHA-NAPHTHOFLAVONE AND HEME</scope>
</reference>
<reference key="22">
    <citation type="journal article" date="1999" name="Drug Metab. Dispos.">
        <title>Detection of a novel cytochrome P-450 1A2 polymorphism (F21L) in Chinese.</title>
        <authorList>
            <person name="Huang J.D."/>
            <person name="Guo W.C."/>
            <person name="Lai M.D."/>
            <person name="Guo Y.L."/>
            <person name="Lambert G.H."/>
        </authorList>
    </citation>
    <scope>VARIANT LEU-21</scope>
</reference>
<reference key="23">
    <citation type="journal article" date="2001" name="Hum. Mutat.">
        <title>Five novel natural allelic variants-951A-&gt;C, 1042G-&gt;A (D348N), 1156A-&gt;T (I386F), 1217G-&gt;A (C406Y) and 1291C-&gt;T (C431Y)-of the human CYP1A2 gene in a French Caucasian population.</title>
        <authorList>
            <person name="Chevalier D."/>
            <person name="Cauffiez C."/>
            <person name="Allorge D."/>
            <person name="Lo-Guidice J.-M."/>
            <person name="Lhermitte M."/>
            <person name="Lafitte J.-J."/>
            <person name="Broly F."/>
        </authorList>
    </citation>
    <scope>VARIANTS ASN-348; PHE-386; TYR-406 AND TRP-431</scope>
</reference>
<reference key="24">
    <citation type="journal article" date="2004" name="J. Pharmacol. Exp. Ther.">
        <title>Six novel nonsynonymous CYP1A2 gene polymorphisms: catalytic activities of the naturally occurring variant enzymes.</title>
        <authorList>
            <person name="Murayama N."/>
            <person name="Soyama A."/>
            <person name="Saito Y."/>
            <person name="Nakajima Y."/>
            <person name="Komamura K."/>
            <person name="Ueno K."/>
            <person name="Kamakura S."/>
            <person name="Kitakaze M."/>
            <person name="Kimura H."/>
            <person name="Goto Y."/>
            <person name="Saitoh O."/>
            <person name="Katoh M."/>
            <person name="Ohnuma T."/>
            <person name="Kawai M."/>
            <person name="Sugai K."/>
            <person name="Ohtsuki T."/>
            <person name="Suzuki C."/>
            <person name="Minami N."/>
            <person name="Ozawa S."/>
            <person name="Sawada J."/>
        </authorList>
    </citation>
    <scope>VARIANTS MET-83; GLN-168; LEU-186; CYS-212; SER-299 AND ILE-438</scope>
</reference>
<reference key="25">
    <citation type="journal article" date="2004" name="Pharmacogenomics">
        <title>Genetic variation in eleven phase I drug metabolism genes in an ethnically diverse population.</title>
        <authorList>
            <person name="Solus J.F."/>
            <person name="Arietta B.J."/>
            <person name="Harris J.R."/>
            <person name="Sexton D.P."/>
            <person name="Steward J.Q."/>
            <person name="McMunn C."/>
            <person name="Ihrie P."/>
            <person name="Mehall J.M."/>
            <person name="Edwards T.L."/>
            <person name="Dawson E.P."/>
        </authorList>
    </citation>
    <scope>VARIANTS CYS-18; ARG-298; VAL-314 AND TRP-431</scope>
</reference>
<reference key="26">
    <citation type="journal article" date="2005" name="Drug Metab. Pharmacokinet.">
        <title>Single nucleotide polymorphisms and haplotypes of CYP1A2 in a Japanese population.</title>
        <authorList>
            <person name="Soyama A."/>
            <person name="Saito Y."/>
            <person name="Hanioka N."/>
            <person name="Maekawa K."/>
            <person name="Komamura K."/>
            <person name="Kamakura S."/>
            <person name="Kitakaze M."/>
            <person name="Tomoike H."/>
            <person name="Ueno K."/>
            <person name="Goto Y."/>
            <person name="Kimura H."/>
            <person name="Katoh M."/>
            <person name="Sugai K."/>
            <person name="Saitoh O."/>
            <person name="Kawai M."/>
            <person name="Ohnuma T."/>
            <person name="Ohtsuki T."/>
            <person name="Suzuki C."/>
            <person name="Minami N."/>
            <person name="Kamatani N."/>
            <person name="Ozawa S."/>
            <person name="Sawada J."/>
        </authorList>
    </citation>
    <scope>VARIANTS ARG-42; GLN-377 AND HIS-456</scope>
</reference>
<reference key="27">
    <citation type="journal article" date="2005" name="Hum. Mutat.">
        <title>Toward the evaluation of function in genetic variability: characterizing human SNP frequencies and establishing BAC-transgenic mice carrying the human CYP1A1_CYP1A2 locus.</title>
        <authorList>
            <person name="Jiang Z."/>
            <person name="Dalton T.P."/>
            <person name="Jin L."/>
            <person name="Wang B."/>
            <person name="Tsuneoka Y."/>
            <person name="Shertzer H.G."/>
            <person name="Deka R."/>
            <person name="Nebert D.W."/>
        </authorList>
    </citation>
    <scope>VARIANT CYS-18</scope>
</reference>
<reference key="28">
    <citation type="journal article" date="2006" name="JAMA">
        <title>Coffee, CYP1A2 genotype, and risk of myocardial infarction.</title>
        <authorList>
            <person name="Cornelis M.C."/>
            <person name="El-Sohemy A."/>
            <person name="Kabagambe E.K."/>
            <person name="Campos H."/>
        </authorList>
    </citation>
    <scope>EFFECT OF CAFFEINE METABOLISM ON RISKS OF MYOCARDIAL INFARCTION</scope>
    <scope>POLYMORPHISM</scope>
    <scope>FUNCTION</scope>
</reference>